<gene>
    <name type="primary">TFRC</name>
</gene>
<organism>
    <name type="scientific">Homo sapiens</name>
    <name type="common">Human</name>
    <dbReference type="NCBI Taxonomy" id="9606"/>
    <lineage>
        <taxon>Eukaryota</taxon>
        <taxon>Metazoa</taxon>
        <taxon>Chordata</taxon>
        <taxon>Craniata</taxon>
        <taxon>Vertebrata</taxon>
        <taxon>Euteleostomi</taxon>
        <taxon>Mammalia</taxon>
        <taxon>Eutheria</taxon>
        <taxon>Euarchontoglires</taxon>
        <taxon>Primates</taxon>
        <taxon>Haplorrhini</taxon>
        <taxon>Catarrhini</taxon>
        <taxon>Hominidae</taxon>
        <taxon>Homo</taxon>
    </lineage>
</organism>
<reference key="1">
    <citation type="journal article" date="1984" name="Nature">
        <title>Primary structure of human transferrin receptor deduced from the mRNA sequence.</title>
        <authorList>
            <person name="Schneider C."/>
            <person name="Owen M.J."/>
            <person name="Banville D."/>
            <person name="Williams J.G."/>
        </authorList>
    </citation>
    <scope>NUCLEOTIDE SEQUENCE [MRNA]</scope>
    <scope>VARIANT SER-142</scope>
</reference>
<reference key="2">
    <citation type="journal article" date="1984" name="Cell">
        <title>The human transferrin receptor gene: genomic organization, and the complete primary structure of the receptor deduced from a cDNA sequence.</title>
        <authorList>
            <person name="McClelland A."/>
            <person name="Kuhn L.C."/>
            <person name="Ruddle F.H."/>
        </authorList>
    </citation>
    <scope>NUCLEOTIDE SEQUENCE [MRNA]</scope>
    <scope>VARIANT SER-142</scope>
</reference>
<reference key="3">
    <citation type="journal article" date="1997" name="Gene">
        <title>Exon/intron structure of the human transferrin receptor gene.</title>
        <authorList>
            <person name="Evans P."/>
            <person name="Kemp J."/>
        </authorList>
    </citation>
    <scope>NUCLEOTIDE SEQUENCE [GENOMIC DNA]</scope>
    <source>
        <tissue>Placenta</tissue>
    </source>
</reference>
<reference key="4">
    <citation type="thesis" date="1999" institute="University of Iowa" country="United States">
        <title>Molecular and evolutionary studies of the transferrin receptor.</title>
        <authorList>
            <person name="Wheeler D.L."/>
        </authorList>
    </citation>
    <scope>NUCLEOTIDE SEQUENCE [GENOMIC DNA]</scope>
    <source>
        <tissue>Placenta</tissue>
    </source>
</reference>
<reference key="5">
    <citation type="submission" date="2005-03" db="EMBL/GenBank/DDBJ databases">
        <authorList>
            <person name="Totoki Y."/>
            <person name="Toyoda A."/>
            <person name="Takeda T."/>
            <person name="Sakaki Y."/>
            <person name="Tanaka A."/>
            <person name="Yokoyama S."/>
            <person name="Ohara O."/>
            <person name="Nagase T."/>
            <person name="Kikuno R.F."/>
        </authorList>
    </citation>
    <scope>NUCLEOTIDE SEQUENCE [LARGE SCALE MRNA]</scope>
    <source>
        <tissue>Brain</tissue>
    </source>
</reference>
<reference key="6">
    <citation type="submission" date="2006-04" db="EMBL/GenBank/DDBJ databases">
        <authorList>
            <consortium name="NIEHS SNPs program"/>
        </authorList>
    </citation>
    <scope>NUCLEOTIDE SEQUENCE [GENOMIC DNA]</scope>
</reference>
<reference key="7">
    <citation type="submission" date="2005-09" db="EMBL/GenBank/DDBJ databases">
        <authorList>
            <person name="Mural R.J."/>
            <person name="Istrail S."/>
            <person name="Sutton G.G."/>
            <person name="Florea L."/>
            <person name="Halpern A.L."/>
            <person name="Mobarry C.M."/>
            <person name="Lippert R."/>
            <person name="Walenz B."/>
            <person name="Shatkay H."/>
            <person name="Dew I."/>
            <person name="Miller J.R."/>
            <person name="Flanigan M.J."/>
            <person name="Edwards N.J."/>
            <person name="Bolanos R."/>
            <person name="Fasulo D."/>
            <person name="Halldorsson B.V."/>
            <person name="Hannenhalli S."/>
            <person name="Turner R."/>
            <person name="Yooseph S."/>
            <person name="Lu F."/>
            <person name="Nusskern D.R."/>
            <person name="Shue B.C."/>
            <person name="Zheng X.H."/>
            <person name="Zhong F."/>
            <person name="Delcher A.L."/>
            <person name="Huson D.H."/>
            <person name="Kravitz S.A."/>
            <person name="Mouchard L."/>
            <person name="Reinert K."/>
            <person name="Remington K.A."/>
            <person name="Clark A.G."/>
            <person name="Waterman M.S."/>
            <person name="Eichler E.E."/>
            <person name="Adams M.D."/>
            <person name="Hunkapiller M.W."/>
            <person name="Myers E.W."/>
            <person name="Venter J.C."/>
        </authorList>
    </citation>
    <scope>NUCLEOTIDE SEQUENCE [LARGE SCALE GENOMIC DNA]</scope>
</reference>
<reference key="8">
    <citation type="journal article" date="2004" name="Genome Res.">
        <title>The status, quality, and expansion of the NIH full-length cDNA project: the Mammalian Gene Collection (MGC).</title>
        <authorList>
            <consortium name="The MGC Project Team"/>
        </authorList>
    </citation>
    <scope>NUCLEOTIDE SEQUENCE [LARGE SCALE MRNA]</scope>
    <source>
        <tissue>Eye</tissue>
    </source>
</reference>
<reference key="9">
    <citation type="journal article" date="1990" name="J. Biol. Chem.">
        <title>Serum transferrin receptor is a truncated form of tissue receptor.</title>
        <authorList>
            <person name="Shih Y.J."/>
            <person name="Baynes R.D."/>
            <person name="Hudson B.G."/>
            <person name="Flowers C.H."/>
            <person name="Skikne B.S."/>
            <person name="Cook J.D."/>
        </authorList>
    </citation>
    <scope>PROTEIN SEQUENCE OF 101-119 (STFR)</scope>
</reference>
<reference key="10">
    <citation type="journal article" date="1991" name="Proc. Soc. Exp. Biol. Med.">
        <title>Characterization of transferrin receptor released by K562 erythroleukemia cells.</title>
        <authorList>
            <person name="Baynes R.D."/>
            <person name="Shih Y.J."/>
            <person name="Hudson B.G."/>
            <person name="Cook J.D."/>
        </authorList>
    </citation>
    <scope>PROTEIN SEQUENCE OF 101-123 (STFR)</scope>
    <scope>CHARACTERIZATION</scope>
    <source>
        <tissue>Erythroleukemia</tissue>
    </source>
</reference>
<reference key="11">
    <citation type="journal article" date="1995" name="Biochem. J.">
        <title>Identification of a novel form of the alpha 3 integrin subunit: covalent association with transferrin receptor.</title>
        <authorList>
            <person name="Coppolino M."/>
            <person name="Migliorini M."/>
            <person name="Argraves W.S."/>
            <person name="Dedhar S."/>
        </authorList>
    </citation>
    <scope>PROTEIN SEQUENCE OF 288-302; 694-708 AND 721-730</scope>
    <source>
        <tissue>Prostatic carcinoma</tissue>
    </source>
</reference>
<reference key="12">
    <citation type="journal article" date="1992" name="Nature">
        <title>Predominant naturally processed peptides bound to HLA-DR1 are derived from MHC-related molecules and are heterogeneous in size.</title>
        <authorList>
            <person name="Chicz R.M."/>
            <person name="Urban R.G."/>
            <person name="Lane W.S."/>
            <person name="Gorga J.C."/>
            <person name="Stern L.J."/>
            <person name="Vignali D.A.A."/>
            <person name="Strominger J.L."/>
        </authorList>
    </citation>
    <scope>PROTEIN SEQUENCE OF 680-696</scope>
</reference>
<reference key="13">
    <citation type="journal article" date="1987" name="Cell">
        <title>Endocytosis of the transferrin receptor requires the cytoplasmic domain but not its phosphorylation site.</title>
        <authorList>
            <person name="Rothenberger S."/>
            <person name="Iacopetta B.J."/>
            <person name="Kuhn L.C."/>
        </authorList>
    </citation>
    <scope>FUNCTION</scope>
</reference>
<reference key="14">
    <citation type="journal article" date="1987" name="EMBO J.">
        <title>Identification of the intermolecular disulfide bonds of the human transferrin receptor and its lipid-attachment site.</title>
        <authorList>
            <person name="Jing S."/>
            <person name="Trowbridge I.S."/>
        </authorList>
    </citation>
    <scope>PALMITOYLATION AT CYS-62 AND CYS-67</scope>
    <scope>INTERCHAIN DISULFIDE BOND AT CYS-89 AND CYS-98</scope>
</reference>
<reference key="15">
    <citation type="journal article" date="1989" name="EMBO J.">
        <title>Intermolecular disulfide bonds are not required for the expression of the dimeric state and functional activity of the transferrin receptor.</title>
        <authorList>
            <person name="Alvarez E."/>
            <person name="Girones N."/>
            <person name="Davis R.J."/>
        </authorList>
    </citation>
    <scope>MUTAGENESIS OF CYSTEINE RESIDUES INVOLVED IN INTERMOLECULAR BONDS</scope>
</reference>
<reference key="16">
    <citation type="journal article" date="1990" name="Biochem. J.">
        <title>A point mutation in the cytoplasmic domain of the transferrin receptor inhibits endocytosis.</title>
        <authorList>
            <person name="Alvarez E."/>
            <person name="Girones N."/>
            <person name="Davis R.J."/>
        </authorList>
    </citation>
    <scope>MUTAGENESIS OF TYR-20</scope>
</reference>
<reference key="17">
    <citation type="journal article" date="1990" name="J. Cell Biol.">
        <title>Role of the human transferrin receptor cytoplasmic domain in endocytosis: localization of a specific signal sequence for internalization.</title>
        <authorList>
            <person name="Jing S."/>
            <person name="Spencer T."/>
            <person name="Miller K."/>
            <person name="Hopkins C."/>
            <person name="Trowbridge I.S."/>
        </authorList>
    </citation>
    <scope>INTERNALIZATION SEQUENCE</scope>
    <scope>MUTAGENESIS OF TYR-20</scope>
</reference>
<reference key="18">
    <citation type="journal article" date="1992" name="Glycobiology">
        <title>Presence of O-linked oligosaccharide on a threonine residue in the human transferrin receptor.</title>
        <authorList>
            <person name="Do S.-I."/>
            <person name="Cummings R.D."/>
        </authorList>
    </citation>
    <scope>GLYCOSYLATION AT THR-104</scope>
</reference>
<reference key="19">
    <citation type="journal article" date="1992" name="Glycobiology">
        <title>Identification of the O-linked glycosylation site of the human transferrin receptor.</title>
        <authorList>
            <person name="Hayes G.R."/>
            <person name="Enns C.A."/>
            <person name="Lucas J.J."/>
        </authorList>
    </citation>
    <scope>GLYCOSYLATION AT THR-104</scope>
</reference>
<reference key="20">
    <citation type="journal article" date="1993" name="J. Biol. Chem.">
        <title>YTRF is the conserved internalization signal of the transferrin receptor, and a second YTRF signal at position 31-34 enhances endocytosis.</title>
        <authorList>
            <person name="Collawn J.F."/>
            <person name="Lai A."/>
            <person name="Domingo D.L."/>
            <person name="Fitch M."/>
            <person name="Hatton S."/>
            <person name="Trowbridge I.S."/>
        </authorList>
    </citation>
    <scope>MUTAGENESIS OF 20-TYR--PHE-23; TYR-20; THR-21 AND PHE-23</scope>
</reference>
<reference key="21">
    <citation type="journal article" date="1995" name="Glycobiology">
        <title>The critical glycosylation site of human transferrin receptor contains a high-mannose oligosaccharide.</title>
        <authorList>
            <person name="Hayes G.R."/>
            <person name="Williams A."/>
            <person name="Costello C.E."/>
            <person name="Enns C.A."/>
            <person name="Lucas J.J."/>
        </authorList>
    </citation>
    <scope>GLYCOSYLATION AT ASN-727</scope>
    <scope>STRUCTURE OF CARBOHYDRATES ON ASN-727</scope>
</reference>
<reference key="22">
    <citation type="journal article" date="1996" name="Eur. J. Biochem.">
        <title>Functional analysis of human/chicken transferrin receptor chimeras indicates that the carboxy-terminal region is important for ligand binding.</title>
        <authorList>
            <person name="Buchegger F."/>
            <person name="Trowbridge I.S."/>
            <person name="Liu L.F."/>
            <person name="White S."/>
            <person name="Collawn J.F."/>
        </authorList>
    </citation>
    <scope>IDENTIFICATION OF LIGAND-BINDING DOMAIN</scope>
</reference>
<reference key="23">
    <citation type="journal article" date="1999" name="Biochem. J.">
        <title>A conserved RGD (Arg-Gly-Asp) motif in the transferrin receptor is required for binding to transferrin.</title>
        <authorList>
            <person name="Dubljevic V."/>
            <person name="Sali A."/>
            <person name="Goding J.W."/>
        </authorList>
    </citation>
    <scope>MUTAGENESIS OF ARG-646; GLY-647 AND ASP-648</scope>
</reference>
<reference key="24">
    <citation type="journal article" date="2001" name="J. Mol. Biol.">
        <title>Mutational analysis of the transferrin receptor reveals overlapping HFE and transferrin binding sites.</title>
        <authorList>
            <person name="West A.P. Jr."/>
            <person name="Giannetti A.M."/>
            <person name="Herr A.B."/>
            <person name="Bennett M.J."/>
            <person name="Nangiana J.S."/>
            <person name="Pierce J.R."/>
            <person name="Weiner L.P."/>
            <person name="Snow P.M."/>
            <person name="Bjorkman P.J."/>
        </authorList>
    </citation>
    <scope>MUTAGENESIS</scope>
</reference>
<reference key="25">
    <citation type="journal article" date="2005" name="Cell">
        <title>TTP specifically regulates the internalization of the transferrin receptor.</title>
        <authorList>
            <person name="Tosoni D."/>
            <person name="Puri C."/>
            <person name="Confalonieri S."/>
            <person name="Salcini A.E."/>
            <person name="De Camilli P."/>
            <person name="Tacchetti C."/>
            <person name="Di Fiore P.P."/>
        </authorList>
    </citation>
    <scope>INTERACTION WITH SH3BP4</scope>
</reference>
<reference key="26">
    <citation type="journal article" date="2005" name="J. Proteome Res.">
        <title>Human plasma N-glycoproteome analysis by immunoaffinity subtraction, hydrazide chemistry, and mass spectrometry.</title>
        <authorList>
            <person name="Liu T."/>
            <person name="Qian W.-J."/>
            <person name="Gritsenko M.A."/>
            <person name="Camp D.G. II"/>
            <person name="Monroe M.E."/>
            <person name="Moore R.J."/>
            <person name="Smith R.D."/>
        </authorList>
    </citation>
    <scope>GLYCOSYLATION [LARGE SCALE ANALYSIS] AT ASN-251</scope>
    <source>
        <tissue>Plasma</tissue>
    </source>
</reference>
<reference key="27">
    <citation type="journal article" date="2005" name="Nat. Biotechnol.">
        <title>Immunoaffinity profiling of tyrosine phosphorylation in cancer cells.</title>
        <authorList>
            <person name="Rush J."/>
            <person name="Moritz A."/>
            <person name="Lee K.A."/>
            <person name="Guo A."/>
            <person name="Goss V.L."/>
            <person name="Spek E.J."/>
            <person name="Zhang H."/>
            <person name="Zha X.-M."/>
            <person name="Polakiewicz R.D."/>
            <person name="Comb M.J."/>
        </authorList>
    </citation>
    <scope>IDENTIFICATION BY MASS SPECTROMETRY [LARGE SCALE ANALYSIS]</scope>
</reference>
<reference key="28">
    <citation type="journal article" date="2006" name="J. Proteome Res.">
        <title>Proteomic and bioinformatic characterization of the biogenesis and function of melanosomes.</title>
        <authorList>
            <person name="Chi A."/>
            <person name="Valencia J.C."/>
            <person name="Hu Z.-Z."/>
            <person name="Watabe H."/>
            <person name="Yamaguchi H."/>
            <person name="Mangini N.J."/>
            <person name="Huang H."/>
            <person name="Canfield V.A."/>
            <person name="Cheng K.C."/>
            <person name="Yang F."/>
            <person name="Abe R."/>
            <person name="Yamagishi S."/>
            <person name="Shabanowitz J."/>
            <person name="Hearing V.J."/>
            <person name="Wu C."/>
            <person name="Appella E."/>
            <person name="Hunt D.F."/>
        </authorList>
    </citation>
    <scope>SUBCELLULAR LOCATION [LARGE SCALE ANALYSIS]</scope>
    <source>
        <tissue>Melanoma</tissue>
    </source>
</reference>
<reference key="29">
    <citation type="journal article" date="2007" name="Nature">
        <title>Transferrin receptor 1 is a cellular receptor for New World haemorrhagic fever arenaviruses.</title>
        <authorList>
            <person name="Radoshitzky S.R."/>
            <person name="Abraham J."/>
            <person name="Spiropoulou C.F."/>
            <person name="Kuhn J.H."/>
            <person name="Nguyen D."/>
            <person name="Li W."/>
            <person name="Nagel J."/>
            <person name="Schmidt P.J."/>
            <person name="Nunberg J.H."/>
            <person name="Andrews N.C."/>
            <person name="Farzan M."/>
            <person name="Choe H."/>
        </authorList>
    </citation>
    <scope>FUNCTION (MICROBIAL INFECTION)</scope>
    <scope>INTERACTION WITH MACHUPO VIRUS PROTEIN GLYCOPROTEIN COMPLEX</scope>
</reference>
<reference key="30">
    <citation type="journal article" date="2008" name="Proc. Natl. Acad. Sci. U.S.A.">
        <title>A quantitative atlas of mitotic phosphorylation.</title>
        <authorList>
            <person name="Dephoure N."/>
            <person name="Zhou C."/>
            <person name="Villen J."/>
            <person name="Beausoleil S.A."/>
            <person name="Bakalarski C.E."/>
            <person name="Elledge S.J."/>
            <person name="Gygi S.P."/>
        </authorList>
    </citation>
    <scope>PHOSPHORYLATION [LARGE SCALE ANALYSIS] AT THR-21</scope>
    <scope>IDENTIFICATION BY MASS SPECTROMETRY [LARGE SCALE ANALYSIS]</scope>
    <source>
        <tissue>Cervix carcinoma</tissue>
    </source>
</reference>
<reference key="31">
    <citation type="journal article" date="2008" name="Proc. Natl. Acad. Sci. U.S.A.">
        <title>Receptor determinants of zoonotic transmission of New World hemorrhagic fever arenaviruses.</title>
        <authorList>
            <person name="Radoshitzky S.R."/>
            <person name="Kuhn J.H."/>
            <person name="Spiropoulou C.F."/>
            <person name="Albarino C.G."/>
            <person name="Nguyen D.P."/>
            <person name="Salazar-Bravo J."/>
            <person name="Dorfman T."/>
            <person name="Lee A.S."/>
            <person name="Wang E."/>
            <person name="Ross S.R."/>
            <person name="Choe H."/>
            <person name="Farzan M."/>
        </authorList>
    </citation>
    <scope>FUNCTION (MICROBIAL INFECTION)</scope>
    <scope>INTERACTION WITH GUANARITO VIRUS GLYCOPROTEIN COMPLEX</scope>
    <scope>INTERACTION WITH JUNIN VIRUS GLYCOPROTEIN COMPLEX</scope>
    <scope>INTERACTION WITH MACHUPO VIRUS GLYCOPROTEIN COMPLEX</scope>
</reference>
<reference key="32">
    <citation type="journal article" date="2009" name="J. Proteome Res.">
        <title>Glycoproteomics analysis of human liver tissue by combination of multiple enzyme digestion and hydrazide chemistry.</title>
        <authorList>
            <person name="Chen R."/>
            <person name="Jiang X."/>
            <person name="Sun D."/>
            <person name="Han G."/>
            <person name="Wang F."/>
            <person name="Ye M."/>
            <person name="Wang L."/>
            <person name="Zou H."/>
        </authorList>
    </citation>
    <scope>GLYCOSYLATION [LARGE SCALE ANALYSIS] AT ASN-251 AND ASN-727</scope>
    <source>
        <tissue>Liver</tissue>
    </source>
</reference>
<reference key="33">
    <citation type="journal article" date="2009" name="Nat. Biotechnol.">
        <title>Mass-spectrometric identification and relative quantification of N-linked cell surface glycoproteins.</title>
        <authorList>
            <person name="Wollscheid B."/>
            <person name="Bausch-Fluck D."/>
            <person name="Henderson C."/>
            <person name="O'Brien R."/>
            <person name="Bibel M."/>
            <person name="Schiess R."/>
            <person name="Aebersold R."/>
            <person name="Watts J.D."/>
        </authorList>
    </citation>
    <scope>GLYCOSYLATION [LARGE SCALE ANALYSIS] AT ASN-251</scope>
    <source>
        <tissue>Leukemic T-cell</tissue>
    </source>
</reference>
<reference key="34">
    <citation type="journal article" date="2009" name="Sci. Signal.">
        <title>Quantitative phosphoproteomic analysis of T cell receptor signaling reveals system-wide modulation of protein-protein interactions.</title>
        <authorList>
            <person name="Mayya V."/>
            <person name="Lundgren D.H."/>
            <person name="Hwang S.-I."/>
            <person name="Rezaul K."/>
            <person name="Wu L."/>
            <person name="Eng J.K."/>
            <person name="Rodionov V."/>
            <person name="Han D.K."/>
        </authorList>
    </citation>
    <scope>IDENTIFICATION BY MASS SPECTROMETRY [LARGE SCALE ANALYSIS]</scope>
    <source>
        <tissue>Leukemic T-cell</tissue>
    </source>
</reference>
<reference key="35">
    <citation type="journal article" date="2010" name="Sci. Signal.">
        <title>Quantitative phosphoproteomics reveals widespread full phosphorylation site occupancy during mitosis.</title>
        <authorList>
            <person name="Olsen J.V."/>
            <person name="Vermeulen M."/>
            <person name="Santamaria A."/>
            <person name="Kumar C."/>
            <person name="Miller M.L."/>
            <person name="Jensen L.J."/>
            <person name="Gnad F."/>
            <person name="Cox J."/>
            <person name="Jensen T.S."/>
            <person name="Nigg E.A."/>
            <person name="Brunak S."/>
            <person name="Mann M."/>
        </authorList>
    </citation>
    <scope>PHOSPHORYLATION [LARGE SCALE ANALYSIS] AT TYR-20</scope>
    <scope>IDENTIFICATION BY MASS SPECTROMETRY [LARGE SCALE ANALYSIS]</scope>
    <source>
        <tissue>Cervix carcinoma</tissue>
    </source>
</reference>
<reference key="36">
    <citation type="journal article" date="2011" name="BMC Syst. Biol.">
        <title>Initial characterization of the human central proteome.</title>
        <authorList>
            <person name="Burkard T.R."/>
            <person name="Planyavsky M."/>
            <person name="Kaupe I."/>
            <person name="Breitwieser F.P."/>
            <person name="Buerckstuemmer T."/>
            <person name="Bennett K.L."/>
            <person name="Superti-Furga G."/>
            <person name="Colinge J."/>
        </authorList>
    </citation>
    <scope>IDENTIFICATION BY MASS SPECTROMETRY [LARGE SCALE ANALYSIS]</scope>
</reference>
<reference key="37">
    <citation type="journal article" date="2013" name="J. Proteome Res.">
        <title>Toward a comprehensive characterization of a human cancer cell phosphoproteome.</title>
        <authorList>
            <person name="Zhou H."/>
            <person name="Di Palma S."/>
            <person name="Preisinger C."/>
            <person name="Peng M."/>
            <person name="Polat A.N."/>
            <person name="Heck A.J."/>
            <person name="Mohammed S."/>
        </authorList>
    </citation>
    <scope>PHOSPHORYLATION [LARGE SCALE ANALYSIS] AT SER-10</scope>
    <scope>IDENTIFICATION BY MASS SPECTROMETRY [LARGE SCALE ANALYSIS]</scope>
    <source>
        <tissue>Cervix carcinoma</tissue>
        <tissue>Erythroleukemia</tissue>
    </source>
</reference>
<reference key="38">
    <citation type="journal article" date="2014" name="J. Proteomics">
        <title>An enzyme assisted RP-RPLC approach for in-depth analysis of human liver phosphoproteome.</title>
        <authorList>
            <person name="Bian Y."/>
            <person name="Song C."/>
            <person name="Cheng K."/>
            <person name="Dong M."/>
            <person name="Wang F."/>
            <person name="Huang J."/>
            <person name="Sun D."/>
            <person name="Wang L."/>
            <person name="Ye M."/>
            <person name="Zou H."/>
        </authorList>
    </citation>
    <scope>IDENTIFICATION BY MASS SPECTROMETRY [LARGE SCALE ANALYSIS]</scope>
    <source>
        <tissue>Liver</tissue>
    </source>
</reference>
<reference key="39">
    <citation type="journal article" date="2015" name="Nature">
        <title>Regulation of mitochondrial morphology and function by stearoylation of TFR1.</title>
        <authorList>
            <person name="Senyilmaz D."/>
            <person name="Virtue S."/>
            <person name="Xu X."/>
            <person name="Tan C.Y."/>
            <person name="Griffin J.L."/>
            <person name="Miller A.K."/>
            <person name="Vidal-Puig A."/>
            <person name="Teleman A.A."/>
        </authorList>
    </citation>
    <scope>FUNCTION</scope>
    <scope>STEAROYLATION</scope>
</reference>
<reference key="40">
    <citation type="journal article" date="2015" name="Proteomics">
        <title>N-terminome analysis of the human mitochondrial proteome.</title>
        <authorList>
            <person name="Vaca Jacome A.S."/>
            <person name="Rabilloud T."/>
            <person name="Schaeffer-Reiss C."/>
            <person name="Rompais M."/>
            <person name="Ayoub D."/>
            <person name="Lane L."/>
            <person name="Bairoch A."/>
            <person name="Van Dorsselaer A."/>
            <person name="Carapito C."/>
        </authorList>
    </citation>
    <scope>IDENTIFICATION BY MASS SPECTROMETRY [LARGE SCALE ANALYSIS]</scope>
</reference>
<reference key="41">
    <citation type="journal article" date="2023" name="J. Virol.">
        <title>Transferrin Receptor Protein 1 Is an Entry Factor for Rabies Virus.</title>
        <authorList>
            <person name="Wang X."/>
            <person name="Wen Z."/>
            <person name="Cao H."/>
            <person name="Luo J."/>
            <person name="Shuai L."/>
            <person name="Wang C."/>
            <person name="Ge J."/>
            <person name="Wang X."/>
            <person name="Bu Z."/>
            <person name="Wang J."/>
        </authorList>
    </citation>
    <scope>FUNCTION (MICROBIAL INFECTION)</scope>
    <scope>INTERACTION WITH RABV PROTEIN G (MICROBIAL INFECTION)</scope>
</reference>
<reference key="42">
    <citation type="journal article" date="2023" name="J. Virol.">
        <title>Transferrin Receptor Protein 1 Cooperates with mGluR2 To Mediate the Internalization of Rabies Virus and SARS-CoV-2.</title>
        <authorList>
            <person name="Wang X."/>
            <person name="Wen Z."/>
            <person name="Cao H."/>
            <person name="Luo J."/>
            <person name="Shuai L."/>
            <person name="Wang C."/>
            <person name="Ge J."/>
            <person name="Wang X."/>
            <person name="Bu Z."/>
            <person name="Wang J."/>
        </authorList>
    </citation>
    <scope>FUNCTION (MICROBIAL INFECTION)</scope>
    <scope>INTERACTION WITH SARS-COV-2 SPIKE PROTEIN S (MICROBIAL INFECTION)</scope>
    <scope>INTERACTION WITH RABIES VIRUS PROTEIN G (MICROBIAL INFECTION)</scope>
</reference>
<reference key="43">
    <citation type="journal article" date="1998" name="Structure">
        <title>Structural model of phospholipid-reconstituted human transferrin receptor derived by electron microscopy.</title>
        <authorList>
            <person name="Fuchs H."/>
            <person name="Luecken W."/>
            <person name="Tauber R."/>
            <person name="Engel A."/>
        </authorList>
    </citation>
    <scope>ELECTRON MICROSCOPY</scope>
    <scope>PHOSPHORYLATION AT SER-24</scope>
</reference>
<reference key="44">
    <citation type="journal article" date="1999" name="Science">
        <title>Crystal structure of the ectodomain of human transferrin receptor.</title>
        <authorList>
            <person name="Lawrence C.M."/>
            <person name="Ray S."/>
            <person name="Babyonyshev M."/>
            <person name="Galluser R."/>
            <person name="Borhani D.W."/>
            <person name="Harrison S.C."/>
        </authorList>
    </citation>
    <scope>X-RAY CRYSTALLOGRAPHY (3.2 ANGSTROMS) OF 121-760</scope>
    <scope>GLYCOSYLATION AT ASN-251; ASN-317 AND ASN-727</scope>
</reference>
<reference key="45">
    <citation type="journal article" date="2001" name="Hum. Genet.">
        <title>Identification of 96 single nucleotide polymorphisms in eight genes involved in iron metabolism: efficiency of bioinformatic extraction compared with a systematic sequencing approach.</title>
        <authorList>
            <person name="Douabin-Gicquel V."/>
            <person name="Soriano N."/>
            <person name="Ferran H."/>
            <person name="Wojcik F."/>
            <person name="Palierne E."/>
            <person name="Tamim S."/>
            <person name="Jovelin T."/>
            <person name="McKie A.T."/>
            <person name="Le Gall J.-Y."/>
            <person name="David V."/>
            <person name="Mosser J."/>
        </authorList>
    </citation>
    <scope>VARIANT SER-142</scope>
</reference>
<reference key="46">
    <citation type="journal article" date="2016" name="Nat. Genet.">
        <title>A missense mutation in TFRC, encoding transferrin receptor 1, causes combined immunodeficiency.</title>
        <authorList>
            <person name="Jabara H.H."/>
            <person name="Boyden S.E."/>
            <person name="Chou J."/>
            <person name="Ramesh N."/>
            <person name="Massaad M.J."/>
            <person name="Benson H."/>
            <person name="Bainter W."/>
            <person name="Fraulino D."/>
            <person name="Rahimov F."/>
            <person name="Sieff C."/>
            <person name="Liu Z.J."/>
            <person name="Alshemmari S.H."/>
            <person name="Al-Ramadi B.K."/>
            <person name="Al-Dhekri H."/>
            <person name="Arnaout R."/>
            <person name="Abu-Shukair M."/>
            <person name="Vatsayan A."/>
            <person name="Silver E."/>
            <person name="Ahuja S."/>
            <person name="Davies E.G."/>
            <person name="Sola-Visner M."/>
            <person name="Ohsumi T.K."/>
            <person name="Andrews N.C."/>
            <person name="Notarangelo L.D."/>
            <person name="Fleming M.D."/>
            <person name="Al-Herz W."/>
            <person name="Kunkel L.M."/>
            <person name="Geha R.S."/>
        </authorList>
    </citation>
    <scope>INVOLVEMENT IN IMD46</scope>
    <scope>VARIANT IMD46 HIS-20</scope>
    <scope>CHARACTERIZATION OF VARIANT IMD46 HIS-20</scope>
    <scope>FUNCTION</scope>
    <scope>INTERACTION WITH STEAP3</scope>
</reference>
<keyword id="KW-0002">3D-structure</keyword>
<keyword id="KW-1003">Cell membrane</keyword>
<keyword id="KW-0903">Direct protein sequencing</keyword>
<keyword id="KW-0225">Disease variant</keyword>
<keyword id="KW-1015">Disulfide bond</keyword>
<keyword id="KW-0254">Endocytosis</keyword>
<keyword id="KW-0325">Glycoprotein</keyword>
<keyword id="KW-1183">Host cell receptor for virus entry</keyword>
<keyword id="KW-0945">Host-virus interaction</keyword>
<keyword id="KW-0449">Lipoprotein</keyword>
<keyword id="KW-0472">Membrane</keyword>
<keyword id="KW-0564">Palmitate</keyword>
<keyword id="KW-0597">Phosphoprotein</keyword>
<keyword id="KW-1267">Proteomics identification</keyword>
<keyword id="KW-0675">Receptor</keyword>
<keyword id="KW-1185">Reference proteome</keyword>
<keyword id="KW-0964">Secreted</keyword>
<keyword id="KW-0735">Signal-anchor</keyword>
<keyword id="KW-0807">Transducer</keyword>
<keyword id="KW-0812">Transmembrane</keyword>
<keyword id="KW-1133">Transmembrane helix</keyword>
<evidence type="ECO:0000250" key="1">
    <source>
        <dbReference type="UniProtKB" id="Q62351"/>
    </source>
</evidence>
<evidence type="ECO:0000255" key="2"/>
<evidence type="ECO:0000269" key="3">
    <source>
    </source>
</evidence>
<evidence type="ECO:0000269" key="4">
    <source>
    </source>
</evidence>
<evidence type="ECO:0000269" key="5">
    <source>
    </source>
</evidence>
<evidence type="ECO:0000269" key="6">
    <source>
    </source>
</evidence>
<evidence type="ECO:0000269" key="7">
    <source>
    </source>
</evidence>
<evidence type="ECO:0000269" key="8">
    <source>
    </source>
</evidence>
<evidence type="ECO:0000269" key="9">
    <source>
    </source>
</evidence>
<evidence type="ECO:0000269" key="10">
    <source>
    </source>
</evidence>
<evidence type="ECO:0000269" key="11">
    <source>
    </source>
</evidence>
<evidence type="ECO:0000269" key="12">
    <source>
    </source>
</evidence>
<evidence type="ECO:0000269" key="13">
    <source>
    </source>
</evidence>
<evidence type="ECO:0000269" key="14">
    <source>
    </source>
</evidence>
<evidence type="ECO:0000269" key="15">
    <source>
    </source>
</evidence>
<evidence type="ECO:0000269" key="16">
    <source>
    </source>
</evidence>
<evidence type="ECO:0000269" key="17">
    <source>
    </source>
</evidence>
<evidence type="ECO:0000269" key="18">
    <source>
    </source>
</evidence>
<evidence type="ECO:0000269" key="19">
    <source>
    </source>
</evidence>
<evidence type="ECO:0000269" key="20">
    <source>
    </source>
</evidence>
<evidence type="ECO:0000269" key="21">
    <source>
    </source>
</evidence>
<evidence type="ECO:0000269" key="22">
    <source>
    </source>
</evidence>
<evidence type="ECO:0000269" key="23">
    <source>
    </source>
</evidence>
<evidence type="ECO:0000269" key="24">
    <source>
    </source>
</evidence>
<evidence type="ECO:0000269" key="25">
    <source>
    </source>
</evidence>
<evidence type="ECO:0000269" key="26">
    <source>
    </source>
</evidence>
<evidence type="ECO:0000269" key="27">
    <source>
    </source>
</evidence>
<evidence type="ECO:0000303" key="28">
    <source>
    </source>
</evidence>
<evidence type="ECO:0000305" key="29"/>
<evidence type="ECO:0000305" key="30">
    <source>
    </source>
</evidence>
<evidence type="ECO:0007744" key="31">
    <source>
        <dbReference type="PDB" id="1CX8"/>
    </source>
</evidence>
<evidence type="ECO:0007744" key="32">
    <source>
    </source>
</evidence>
<evidence type="ECO:0007744" key="33">
    <source>
    </source>
</evidence>
<evidence type="ECO:0007744" key="34">
    <source>
    </source>
</evidence>
<evidence type="ECO:0007829" key="35">
    <source>
        <dbReference type="PDB" id="1CX8"/>
    </source>
</evidence>
<evidence type="ECO:0007829" key="36">
    <source>
        <dbReference type="PDB" id="3KAS"/>
    </source>
</evidence>
<evidence type="ECO:0007829" key="37">
    <source>
        <dbReference type="PDB" id="3S9L"/>
    </source>
</evidence>
<evidence type="ECO:0007829" key="38">
    <source>
        <dbReference type="PDB" id="3S9M"/>
    </source>
</evidence>
<evidence type="ECO:0007829" key="39">
    <source>
        <dbReference type="PDB" id="6OKD"/>
    </source>
</evidence>
<evidence type="ECO:0007829" key="40">
    <source>
        <dbReference type="PDB" id="6W3H"/>
    </source>
</evidence>
<evidence type="ECO:0007829" key="41">
    <source>
        <dbReference type="PDB" id="6WRV"/>
    </source>
</evidence>
<evidence type="ECO:0007829" key="42">
    <source>
        <dbReference type="PDB" id="6WRW"/>
    </source>
</evidence>
<evidence type="ECO:0007829" key="43">
    <source>
        <dbReference type="PDB" id="6WRX"/>
    </source>
</evidence>
<accession>P02786</accession>
<accession>D3DXB0</accession>
<accession>Q1HE24</accession>
<accession>Q59G55</accession>
<accession>Q9UCN0</accession>
<accession>Q9UCU5</accession>
<accession>Q9UDF9</accession>
<accession>Q9UK21</accession>
<sequence length="760" mass="84871">MMDQARSAFSNLFGGEPLSYTRFSLARQVDGDNSHVEMKLAVDEEENADNNTKANVTKPKRCSGSICYGTIAVIVFFLIGFMIGYLGYCKGVEPKTECERLAGTESPVREEPGEDFPAARRLYWDDLKRKLSEKLDSTDFTGTIKLLNENSYVPREAGSQKDENLALYVENQFREFKLSKVWRDQHFVKIQVKDSAQNSVIIVDKNGRLVYLVENPGGYVAYSKAATVTGKLVHANFGTKKDFEDLYTPVNGSIVIVRAGKITFAEKVANAESLNAIGVLIYMDQTKFPIVNAELSFFGHAHLGTGDPYTPGFPSFNHTQFPPSRSSGLPNIPVQTISRAAAEKLFGNMEGDCPSDWKTDSTCRMVTSESKNVKLTVSNVLKEIKILNIFGVIKGFVEPDHYVVVGAQRDAWGPGAAKSGVGTALLLKLAQMFSDMVLKDGFQPSRSIIFASWSAGDFGSVGATEWLEGYLSSLHLKAFTYINLDKAVLGTSNFKVSASPLLYTLIEKTMQNVKHPVTGQFLYQDSNWASKVEKLTLDNAAFPFLAYSGIPAVSFCFCEDTDYPYLGTTMDTYKELIERIPELNKVARAAAEVAGQFVIKLTHDVELNLDYERYNSQLLSFVRDLNQYRADIKEMGLSLQWLYSARGDFFRATSRLTTDFGNAEKTDRFVMKKLNDRVMRVEYHFLSPYVSPKESPFRHVFWGSGSHTLPALLENLKLRKQNNGAFNETLFRNQLALATWTIQGAANALSGDVWDIDNEF</sequence>
<name>TFR1_HUMAN</name>
<protein>
    <recommendedName>
        <fullName>Transferrin receptor protein 1</fullName>
        <shortName>TR</shortName>
        <shortName>TfR</shortName>
        <shortName>TfR1</shortName>
        <shortName>Trfr</shortName>
    </recommendedName>
    <alternativeName>
        <fullName>T9</fullName>
    </alternativeName>
    <alternativeName>
        <fullName>p90</fullName>
    </alternativeName>
    <cdAntigenName>CD71</cdAntigenName>
    <component>
        <recommendedName>
            <fullName>Transferrin receptor protein 1, serum form</fullName>
            <shortName>sTfR</shortName>
        </recommendedName>
    </component>
</protein>
<proteinExistence type="evidence at protein level"/>
<feature type="chain" id="PRO_0000174132" description="Transferrin receptor protein 1">
    <location>
        <begin position="1"/>
        <end position="760"/>
    </location>
</feature>
<feature type="chain" id="PRO_0000292265" description="Transferrin receptor protein 1, serum form">
    <location>
        <begin position="101"/>
        <end position="760"/>
    </location>
</feature>
<feature type="topological domain" description="Cytoplasmic" evidence="2">
    <location>
        <begin position="1"/>
        <end position="67"/>
    </location>
</feature>
<feature type="transmembrane region" description="Helical; Signal-anchor for type II membrane protein" evidence="2">
    <location>
        <begin position="68"/>
        <end position="88"/>
    </location>
</feature>
<feature type="topological domain" description="Extracellular" evidence="2">
    <location>
        <begin position="89"/>
        <end position="760"/>
    </location>
</feature>
<feature type="domain" description="PA">
    <location>
        <begin position="223"/>
        <end position="313"/>
    </location>
</feature>
<feature type="region of interest" description="Mediates interaction with SH3BP4" evidence="8">
    <location>
        <begin position="1"/>
        <end position="67"/>
    </location>
</feature>
<feature type="region of interest" description="Ligand-binding">
    <location>
        <begin position="569"/>
        <end position="760"/>
    </location>
</feature>
<feature type="short sequence motif" description="Endocytosis signal" evidence="15">
    <location>
        <begin position="20"/>
        <end position="23"/>
    </location>
</feature>
<feature type="short sequence motif" description="Stop-transfer sequence" evidence="28">
    <location>
        <begin position="58"/>
        <end position="61"/>
    </location>
</feature>
<feature type="short sequence motif" description="Cell attachment site; required for binding to transferrin">
    <location>
        <begin position="646"/>
        <end position="648"/>
    </location>
</feature>
<feature type="site" description="Cleavage; by trypsin; to produce soluble form">
    <location>
        <begin position="100"/>
        <end position="101"/>
    </location>
</feature>
<feature type="modified residue" description="Phosphoserine" evidence="34">
    <location>
        <position position="10"/>
    </location>
</feature>
<feature type="modified residue" description="Phosphoserine" evidence="1">
    <location>
        <position position="19"/>
    </location>
</feature>
<feature type="modified residue" description="Phosphotyrosine" evidence="33">
    <location>
        <position position="20"/>
    </location>
</feature>
<feature type="modified residue" description="Phosphothreonine" evidence="32">
    <location>
        <position position="21"/>
    </location>
</feature>
<feature type="modified residue" description="Phosphoserine" evidence="27">
    <location>
        <position position="24"/>
    </location>
</feature>
<feature type="lipid moiety-binding region" description="S-palmitoyl cysteine" evidence="20">
    <location>
        <position position="62"/>
    </location>
</feature>
<feature type="lipid moiety-binding region" description="S-palmitoyl cysteine" evidence="30">
    <location>
        <position position="67"/>
    </location>
</feature>
<feature type="glycosylation site" id="CAR_000072" description="O-linked (GalNAc...) threonine" evidence="6 7">
    <location>
        <position position="104"/>
    </location>
</feature>
<feature type="glycosylation site" description="N-linked (GlcNAc...) asparagine" evidence="4 9 13 14 31">
    <location>
        <position position="251"/>
    </location>
</feature>
<feature type="glycosylation site" description="N-linked (GlcNAc...) asparagine" evidence="4 31">
    <location>
        <position position="317"/>
    </location>
</feature>
<feature type="glycosylation site" id="CAR_000173" description="N-linked (GlcNAc...) asparagine" evidence="4 13 25 31">
    <location>
        <position position="727"/>
    </location>
</feature>
<feature type="disulfide bond" description="Interchain" evidence="20">
    <location>
        <position position="89"/>
    </location>
</feature>
<feature type="disulfide bond" description="Interchain" evidence="20">
    <location>
        <position position="98"/>
    </location>
</feature>
<feature type="sequence variant" id="VAR_076365" description="In IMD46; increases protein expression; increases cell surface expression on T and B cells; increases soluble form level; impairs receptor internalization; impairs transferrin transport; impairs T and B cell proliferation as well as B cell class-switching; interacts with STEAP3; doesn't affect receptor internalization in erythroid precursor cells; dbSNP:rs863225436." evidence="18">
    <original>Y</original>
    <variation>H</variation>
    <location>
        <position position="20"/>
    </location>
</feature>
<feature type="sequence variant" id="VAR_012737" description="In dbSNP:rs3817672." evidence="5 23 24">
    <original>G</original>
    <variation>S</variation>
    <location>
        <position position="142"/>
    </location>
</feature>
<feature type="sequence variant" id="VAR_051806" description="In dbSNP:rs41301381.">
    <original>L</original>
    <variation>V</variation>
    <location>
        <position position="212"/>
    </location>
</feature>
<feature type="sequence variant" id="VAR_051807" description="In dbSNP:rs41295879.">
    <original>G</original>
    <variation>S</variation>
    <location>
        <position position="420"/>
    </location>
</feature>
<feature type="sequence variant" id="VAR_051808" description="In dbSNP:rs41298067.">
    <original>R</original>
    <variation>H</variation>
    <location>
        <position position="677"/>
    </location>
</feature>
<feature type="mutagenesis site" description="Only 80% as active as wild-type receptor.">
    <original>FSNL</original>
    <variation>YTRF</variation>
    <location>
        <begin position="9"/>
        <end position="12"/>
    </location>
</feature>
<feature type="mutagenesis site" description="No influence on endocytic uptake of the receptor.">
    <original>YTRFSLARQVDGDNS</original>
    <variation>PPGYSLARQVDYTRF</variation>
    <location>
        <begin position="20"/>
        <end position="34"/>
    </location>
</feature>
<feature type="mutagenesis site" description="Only 16% as active as wild-type receptor." evidence="26">
    <original>YTRF</original>
    <variation>PPGY</variation>
    <location>
        <begin position="20"/>
        <end position="23"/>
    </location>
</feature>
<feature type="mutagenesis site" description="Only 35% as active as wild-type receptor." evidence="15 16 26">
    <original>Y</original>
    <variation>C</variation>
    <location>
        <position position="20"/>
    </location>
</feature>
<feature type="mutagenesis site" description="Only 20% as active as wild-type receptor." evidence="15 16 26">
    <original>Y</original>
    <variation>G</variation>
    <location>
        <position position="20"/>
    </location>
</feature>
<feature type="mutagenesis site" description="Only 88% as active as wild-type receptor." evidence="26">
    <original>T</original>
    <variation>F</variation>
    <location>
        <position position="21"/>
    </location>
</feature>
<feature type="mutagenesis site" description="Only 14% as active as wild-type receptor." evidence="26">
    <original>T</original>
    <variation>TA</variation>
    <location>
        <position position="21"/>
    </location>
</feature>
<feature type="mutagenesis site" description="Only 19% as active as wild-type receptor." evidence="26">
    <original>T</original>
    <variation>TAA</variation>
    <location>
        <position position="21"/>
    </location>
</feature>
<feature type="mutagenesis site" description="Only 48% as active as wild-type receptor." evidence="26">
    <original>F</original>
    <variation>Y</variation>
    <location>
        <position position="23"/>
    </location>
</feature>
<feature type="mutagenesis site" description="2-fold increase of the endocytic uptake of the receptor.">
    <original>GDNS</original>
    <variation>YTRF</variation>
    <location>
        <begin position="31"/>
        <end position="34"/>
    </location>
</feature>
<feature type="mutagenesis site" description="1.27-fold increase of the endocytic uptake of the receptor.">
    <original>NADN</original>
    <variation>YTRF</variation>
    <location>
        <begin position="47"/>
        <end position="50"/>
    </location>
</feature>
<feature type="mutagenesis site" description="20-fold reduced affinity for transferrin receptor. No binding to HFE.">
    <original>L</original>
    <variation>A</variation>
    <location>
        <position position="619"/>
    </location>
</feature>
<feature type="mutagenesis site" description="No significant effect on binding to transferrin nor HFE.">
    <original>V</original>
    <variation>A</variation>
    <location>
        <position position="622"/>
    </location>
</feature>
<feature type="mutagenesis site" description="No significant effect on binding to transferrin nor HFE.">
    <original>R</original>
    <variation>A</variation>
    <location>
        <position position="623"/>
    </location>
</feature>
<feature type="mutagenesis site" description="&gt;5-fold reduced affinity for transferrin. &gt;10-fold reduced affinity for HFE.">
    <original>R</original>
    <variation>A</variation>
    <location>
        <position position="629"/>
    </location>
</feature>
<feature type="mutagenesis site" description="No effect on binding to transferrin. &gt;10-fold reduced affinity for HFE.">
    <original>Q</original>
    <variation>A</variation>
    <location>
        <position position="640"/>
    </location>
</feature>
<feature type="mutagenesis site" description="No significant effect on binding to transferrin nor HFE.">
    <original>W</original>
    <variation>A</variation>
    <location>
        <position position="641"/>
    </location>
</feature>
<feature type="mutagenesis site" description="20-fold reduced affinity for transferrin. No binding to HFE.">
    <original>Y</original>
    <variation>A</variation>
    <location>
        <position position="643"/>
    </location>
</feature>
<feature type="mutagenesis site" description="No significant effect on binding to transferrin nor HFE.">
    <original>S</original>
    <variation>A</variation>
    <location>
        <position position="644"/>
    </location>
</feature>
<feature type="mutagenesis site" description="No binding to transferrin." evidence="3">
    <original>R</original>
    <variation>A</variation>
    <variation>H</variation>
    <location>
        <position position="646"/>
    </location>
</feature>
<feature type="mutagenesis site" description="5% binding to transferrin." evidence="3">
    <original>R</original>
    <variation>K</variation>
    <location>
        <position position="646"/>
    </location>
</feature>
<feature type="mutagenesis site" description="Large effect on affinity for transferrin. 4-fold reduced affinity for HFE." evidence="3">
    <original>G</original>
    <variation>A</variation>
    <location>
        <position position="647"/>
    </location>
</feature>
<feature type="mutagenesis site" description="16% binding to transferrin." evidence="3">
    <original>D</original>
    <variation>A</variation>
    <location>
        <position position="648"/>
    </location>
</feature>
<feature type="mutagenesis site" description="57% binding to transferrin." evidence="3">
    <original>D</original>
    <variation>E</variation>
    <location>
        <position position="648"/>
    </location>
</feature>
<feature type="mutagenesis site" description="&gt;5-fold reduced affinity for transferrin. &gt;10-fold reduced affinity for HFE.">
    <original>F</original>
    <variation>Q</variation>
    <location>
        <position position="650"/>
    </location>
</feature>
<feature type="sequence conflict" description="In Ref. 10; AA sequence." evidence="29" ref="10">
    <original>T</original>
    <variation>K</variation>
    <location>
        <position position="104"/>
    </location>
</feature>
<feature type="sequence conflict" description="In Ref. 10; AA sequence." evidence="29" ref="10">
    <original>R</original>
    <variation>V</variation>
    <location>
        <position position="109"/>
    </location>
</feature>
<feature type="sequence conflict" description="In Ref. 10; AA sequence." evidence="29" ref="10">
    <original>Y</original>
    <variation>T</variation>
    <location>
        <position position="123"/>
    </location>
</feature>
<feature type="helix" evidence="39">
    <location>
        <begin position="124"/>
        <end position="136"/>
    </location>
</feature>
<feature type="helix" evidence="39">
    <location>
        <begin position="141"/>
        <end position="146"/>
    </location>
</feature>
<feature type="helix" evidence="39">
    <location>
        <begin position="150"/>
        <end position="152"/>
    </location>
</feature>
<feature type="helix" evidence="39">
    <location>
        <begin position="160"/>
        <end position="175"/>
    </location>
</feature>
<feature type="strand" evidence="39">
    <location>
        <begin position="179"/>
        <end position="192"/>
    </location>
</feature>
<feature type="helix" evidence="40">
    <location>
        <begin position="195"/>
        <end position="197"/>
    </location>
</feature>
<feature type="strand" evidence="39">
    <location>
        <begin position="199"/>
        <end position="204"/>
    </location>
</feature>
<feature type="turn" evidence="36">
    <location>
        <begin position="205"/>
        <end position="208"/>
    </location>
</feature>
<feature type="strand" evidence="39">
    <location>
        <begin position="209"/>
        <end position="214"/>
    </location>
</feature>
<feature type="strand" evidence="37">
    <location>
        <begin position="220"/>
        <end position="222"/>
    </location>
</feature>
<feature type="strand" evidence="39">
    <location>
        <begin position="226"/>
        <end position="230"/>
    </location>
</feature>
<feature type="strand" evidence="39">
    <location>
        <begin position="232"/>
        <end position="234"/>
    </location>
</feature>
<feature type="strand" evidence="41">
    <location>
        <begin position="236"/>
        <end position="238"/>
    </location>
</feature>
<feature type="helix" evidence="39">
    <location>
        <begin position="240"/>
        <end position="245"/>
    </location>
</feature>
<feature type="strand" evidence="39">
    <location>
        <begin position="253"/>
        <end position="259"/>
    </location>
</feature>
<feature type="strand" evidence="41">
    <location>
        <begin position="260"/>
        <end position="262"/>
    </location>
</feature>
<feature type="helix" evidence="39">
    <location>
        <begin position="264"/>
        <end position="273"/>
    </location>
</feature>
<feature type="strand" evidence="39">
    <location>
        <begin position="278"/>
        <end position="282"/>
    </location>
</feature>
<feature type="turn" evidence="39">
    <location>
        <begin position="285"/>
        <end position="287"/>
    </location>
</feature>
<feature type="strand" evidence="39">
    <location>
        <begin position="303"/>
        <end position="306"/>
    </location>
</feature>
<feature type="strand" evidence="37">
    <location>
        <begin position="308"/>
        <end position="310"/>
    </location>
</feature>
<feature type="strand" evidence="35">
    <location>
        <begin position="311"/>
        <end position="313"/>
    </location>
</feature>
<feature type="helix" evidence="41">
    <location>
        <begin position="317"/>
        <end position="319"/>
    </location>
</feature>
<feature type="strand" evidence="39">
    <location>
        <begin position="334"/>
        <end position="336"/>
    </location>
</feature>
<feature type="helix" evidence="39">
    <location>
        <begin position="339"/>
        <end position="346"/>
    </location>
</feature>
<feature type="strand" evidence="39">
    <location>
        <begin position="349"/>
        <end position="352"/>
    </location>
</feature>
<feature type="helix" evidence="39">
    <location>
        <begin position="355"/>
        <end position="357"/>
    </location>
</feature>
<feature type="strand" evidence="39">
    <location>
        <begin position="364"/>
        <end position="367"/>
    </location>
</feature>
<feature type="strand" evidence="39">
    <location>
        <begin position="372"/>
        <end position="377"/>
    </location>
</feature>
<feature type="strand" evidence="39">
    <location>
        <begin position="380"/>
        <end position="393"/>
    </location>
</feature>
<feature type="strand" evidence="39">
    <location>
        <begin position="396"/>
        <end position="408"/>
    </location>
</feature>
<feature type="strand" evidence="39">
    <location>
        <begin position="411"/>
        <end position="413"/>
    </location>
</feature>
<feature type="turn" evidence="39">
    <location>
        <begin position="416"/>
        <end position="419"/>
    </location>
</feature>
<feature type="helix" evidence="39">
    <location>
        <begin position="420"/>
        <end position="440"/>
    </location>
</feature>
<feature type="strand" evidence="39">
    <location>
        <begin position="445"/>
        <end position="454"/>
    </location>
</feature>
<feature type="helix" evidence="39">
    <location>
        <begin position="456"/>
        <end position="458"/>
    </location>
</feature>
<feature type="helix" evidence="39">
    <location>
        <begin position="461"/>
        <end position="468"/>
    </location>
</feature>
<feature type="turn" evidence="39">
    <location>
        <begin position="469"/>
        <end position="473"/>
    </location>
</feature>
<feature type="helix" evidence="39">
    <location>
        <begin position="474"/>
        <end position="476"/>
    </location>
</feature>
<feature type="strand" evidence="39">
    <location>
        <begin position="478"/>
        <end position="483"/>
    </location>
</feature>
<feature type="strand" evidence="39">
    <location>
        <begin position="491"/>
        <end position="498"/>
    </location>
</feature>
<feature type="helix" evidence="39">
    <location>
        <begin position="500"/>
        <end position="502"/>
    </location>
</feature>
<feature type="helix" evidence="39">
    <location>
        <begin position="503"/>
        <end position="510"/>
    </location>
</feature>
<feature type="strand" evidence="42">
    <location>
        <begin position="512"/>
        <end position="514"/>
    </location>
</feature>
<feature type="turn" evidence="39">
    <location>
        <begin position="516"/>
        <end position="518"/>
    </location>
</feature>
<feature type="strand" evidence="36">
    <location>
        <begin position="520"/>
        <end position="522"/>
    </location>
</feature>
<feature type="helix" evidence="39">
    <location>
        <begin position="528"/>
        <end position="531"/>
    </location>
</feature>
<feature type="helix" evidence="39">
    <location>
        <begin position="541"/>
        <end position="546"/>
    </location>
</feature>
<feature type="strand" evidence="39">
    <location>
        <begin position="552"/>
        <end position="558"/>
    </location>
</feature>
<feature type="turn" evidence="39">
    <location>
        <begin position="564"/>
        <end position="567"/>
    </location>
</feature>
<feature type="helix" evidence="39">
    <location>
        <begin position="573"/>
        <end position="579"/>
    </location>
</feature>
<feature type="helix" evidence="39">
    <location>
        <begin position="583"/>
        <end position="602"/>
    </location>
</feature>
<feature type="strand" evidence="39">
    <location>
        <begin position="603"/>
        <end position="606"/>
    </location>
</feature>
<feature type="helix" evidence="39">
    <location>
        <begin position="613"/>
        <end position="626"/>
    </location>
</feature>
<feature type="helix" evidence="39">
    <location>
        <begin position="629"/>
        <end position="634"/>
    </location>
</feature>
<feature type="helix" evidence="39">
    <location>
        <begin position="640"/>
        <end position="662"/>
    </location>
</feature>
<feature type="helix" evidence="39">
    <location>
        <begin position="668"/>
        <end position="678"/>
    </location>
</feature>
<feature type="turn" evidence="39">
    <location>
        <begin position="679"/>
        <end position="682"/>
    </location>
</feature>
<feature type="helix" evidence="39">
    <location>
        <begin position="683"/>
        <end position="685"/>
    </location>
</feature>
<feature type="strand" evidence="37">
    <location>
        <begin position="688"/>
        <end position="690"/>
    </location>
</feature>
<feature type="turn" evidence="39">
    <location>
        <begin position="692"/>
        <end position="694"/>
    </location>
</feature>
<feature type="turn" evidence="39">
    <location>
        <begin position="700"/>
        <end position="702"/>
    </location>
</feature>
<feature type="strand" evidence="38">
    <location>
        <begin position="705"/>
        <end position="708"/>
    </location>
</feature>
<feature type="helix" evidence="39">
    <location>
        <begin position="709"/>
        <end position="718"/>
    </location>
</feature>
<feature type="strand" evidence="43">
    <location>
        <begin position="719"/>
        <end position="723"/>
    </location>
</feature>
<feature type="helix" evidence="39">
    <location>
        <begin position="728"/>
        <end position="748"/>
    </location>
</feature>
<feature type="strand" evidence="39">
    <location>
        <begin position="750"/>
        <end position="752"/>
    </location>
</feature>
<feature type="helix" evidence="41">
    <location>
        <begin position="753"/>
        <end position="755"/>
    </location>
</feature>
<dbReference type="EMBL" id="X01060">
    <property type="protein sequence ID" value="CAA25527.1"/>
    <property type="molecule type" value="mRNA"/>
</dbReference>
<dbReference type="EMBL" id="M11507">
    <property type="protein sequence ID" value="AAA61153.1"/>
    <property type="molecule type" value="mRNA"/>
</dbReference>
<dbReference type="EMBL" id="AF187320">
    <property type="protein sequence ID" value="AAF04564.1"/>
    <property type="molecule type" value="Genomic_DNA"/>
</dbReference>
<dbReference type="EMBL" id="AB209254">
    <property type="protein sequence ID" value="BAD92491.1"/>
    <property type="status" value="ALT_INIT"/>
    <property type="molecule type" value="mRNA"/>
</dbReference>
<dbReference type="EMBL" id="DQ496099">
    <property type="protein sequence ID" value="ABF47088.1"/>
    <property type="molecule type" value="Genomic_DNA"/>
</dbReference>
<dbReference type="EMBL" id="CH471191">
    <property type="protein sequence ID" value="EAW53670.1"/>
    <property type="molecule type" value="Genomic_DNA"/>
</dbReference>
<dbReference type="EMBL" id="CH471191">
    <property type="protein sequence ID" value="EAW53673.1"/>
    <property type="molecule type" value="Genomic_DNA"/>
</dbReference>
<dbReference type="EMBL" id="BC001188">
    <property type="protein sequence ID" value="AAH01188.1"/>
    <property type="molecule type" value="mRNA"/>
</dbReference>
<dbReference type="CCDS" id="CCDS3312.1"/>
<dbReference type="PIR" id="A93343">
    <property type="entry name" value="JXHU"/>
</dbReference>
<dbReference type="RefSeq" id="NP_001121620.1">
    <property type="nucleotide sequence ID" value="NM_001128148.3"/>
</dbReference>
<dbReference type="RefSeq" id="NP_001300894.1">
    <property type="nucleotide sequence ID" value="NM_001313965.1"/>
</dbReference>
<dbReference type="RefSeq" id="NP_001300895.1">
    <property type="nucleotide sequence ID" value="NM_001313966.1"/>
</dbReference>
<dbReference type="RefSeq" id="NP_003225.2">
    <property type="nucleotide sequence ID" value="NM_003234.4"/>
</dbReference>
<dbReference type="PDB" id="1CX8">
    <property type="method" value="X-ray"/>
    <property type="resolution" value="3.20 A"/>
    <property type="chains" value="A/B/C/D/E/F/G/H=122-760"/>
</dbReference>
<dbReference type="PDB" id="1DE4">
    <property type="method" value="X-ray"/>
    <property type="resolution" value="2.80 A"/>
    <property type="chains" value="C/F/I=121-760"/>
</dbReference>
<dbReference type="PDB" id="1SUV">
    <property type="method" value="EM"/>
    <property type="resolution" value="7.50 A"/>
    <property type="chains" value="A/B=122-760"/>
</dbReference>
<dbReference type="PDB" id="2NSU">
    <property type="method" value="EM"/>
    <property type="resolution" value="27.00 A"/>
    <property type="chains" value="A/B=122-760"/>
</dbReference>
<dbReference type="PDB" id="3KAS">
    <property type="method" value="X-ray"/>
    <property type="resolution" value="2.40 A"/>
    <property type="chains" value="A=121-760"/>
</dbReference>
<dbReference type="PDB" id="3S9L">
    <property type="method" value="X-ray"/>
    <property type="resolution" value="3.22 A"/>
    <property type="chains" value="A/B=120-760"/>
</dbReference>
<dbReference type="PDB" id="3S9M">
    <property type="method" value="X-ray"/>
    <property type="resolution" value="3.32 A"/>
    <property type="chains" value="A/B=120-760"/>
</dbReference>
<dbReference type="PDB" id="3S9N">
    <property type="method" value="X-ray"/>
    <property type="resolution" value="3.25 A"/>
    <property type="chains" value="A/B=120-760"/>
</dbReference>
<dbReference type="PDB" id="6D03">
    <property type="method" value="EM"/>
    <property type="resolution" value="3.68 A"/>
    <property type="chains" value="A/B=121-760"/>
</dbReference>
<dbReference type="PDB" id="6D04">
    <property type="method" value="EM"/>
    <property type="resolution" value="3.74 A"/>
    <property type="chains" value="A/B=121-760"/>
</dbReference>
<dbReference type="PDB" id="6D05">
    <property type="method" value="EM"/>
    <property type="resolution" value="3.80 A"/>
    <property type="chains" value="A/B=121-760"/>
</dbReference>
<dbReference type="PDB" id="6GSR">
    <property type="method" value="EM"/>
    <property type="resolution" value="5.50 A"/>
    <property type="chains" value="Ab/Aq=121-760"/>
</dbReference>
<dbReference type="PDB" id="6H5I">
    <property type="method" value="EM"/>
    <property type="resolution" value="3.90 A"/>
    <property type="chains" value="Ab/Aq=121-760"/>
</dbReference>
<dbReference type="PDB" id="6OKD">
    <property type="method" value="X-ray"/>
    <property type="resolution" value="1.85 A"/>
    <property type="chains" value="A/B=121-760"/>
</dbReference>
<dbReference type="PDB" id="6W3H">
    <property type="method" value="X-ray"/>
    <property type="resolution" value="3.38 A"/>
    <property type="chains" value="C/D=296-326"/>
</dbReference>
<dbReference type="PDB" id="6WRV">
    <property type="method" value="X-ray"/>
    <property type="resolution" value="2.47 A"/>
    <property type="chains" value="A/B/E=121-759"/>
</dbReference>
<dbReference type="PDB" id="6WRW">
    <property type="method" value="X-ray"/>
    <property type="resolution" value="2.84 A"/>
    <property type="chains" value="A/B=121-760"/>
</dbReference>
<dbReference type="PDB" id="6WRX">
    <property type="method" value="X-ray"/>
    <property type="resolution" value="3.07 A"/>
    <property type="chains" value="A/B=121-760"/>
</dbReference>
<dbReference type="PDB" id="6Y76">
    <property type="method" value="X-ray"/>
    <property type="resolution" value="1.98 A"/>
    <property type="chains" value="A/B=197-378"/>
</dbReference>
<dbReference type="PDB" id="7ZQS">
    <property type="method" value="EM"/>
    <property type="resolution" value="2.54 A"/>
    <property type="chains" value="B/D=1-760"/>
</dbReference>
<dbReference type="PDB" id="8P0Z">
    <property type="method" value="X-ray"/>
    <property type="resolution" value="1.88 A"/>
    <property type="chains" value="A=197-299, A=332-377"/>
</dbReference>
<dbReference type="PDBsum" id="1CX8"/>
<dbReference type="PDBsum" id="1DE4"/>
<dbReference type="PDBsum" id="1SUV"/>
<dbReference type="PDBsum" id="2NSU"/>
<dbReference type="PDBsum" id="3KAS"/>
<dbReference type="PDBsum" id="3S9L"/>
<dbReference type="PDBsum" id="3S9M"/>
<dbReference type="PDBsum" id="3S9N"/>
<dbReference type="PDBsum" id="6D03"/>
<dbReference type="PDBsum" id="6D04"/>
<dbReference type="PDBsum" id="6D05"/>
<dbReference type="PDBsum" id="6GSR"/>
<dbReference type="PDBsum" id="6H5I"/>
<dbReference type="PDBsum" id="6OKD"/>
<dbReference type="PDBsum" id="6W3H"/>
<dbReference type="PDBsum" id="6WRV"/>
<dbReference type="PDBsum" id="6WRW"/>
<dbReference type="PDBsum" id="6WRX"/>
<dbReference type="PDBsum" id="6Y76"/>
<dbReference type="PDBsum" id="7ZQS"/>
<dbReference type="PDBsum" id="8P0Z"/>
<dbReference type="EMDB" id="EMD-0046"/>
<dbReference type="EMDB" id="EMD-0140"/>
<dbReference type="EMDB" id="EMD-1288"/>
<dbReference type="EMDB" id="EMD-14874"/>
<dbReference type="EMDB" id="EMD-7783"/>
<dbReference type="EMDB" id="EMD-7784"/>
<dbReference type="EMDB" id="EMD-7785"/>
<dbReference type="SMR" id="P02786"/>
<dbReference type="BioGRID" id="112895">
    <property type="interactions" value="521"/>
</dbReference>
<dbReference type="CORUM" id="P02786"/>
<dbReference type="DIP" id="DIP-2736N"/>
<dbReference type="ELM" id="P02786"/>
<dbReference type="FunCoup" id="P02786">
    <property type="interactions" value="1848"/>
</dbReference>
<dbReference type="IntAct" id="P02786">
    <property type="interactions" value="177"/>
</dbReference>
<dbReference type="MINT" id="P02786"/>
<dbReference type="STRING" id="9606.ENSP00000376197"/>
<dbReference type="ChEMBL" id="CHEMBL3712860"/>
<dbReference type="DrugBank" id="DB13949">
    <property type="generic name" value="Ferric cation"/>
</dbReference>
<dbReference type="DrugBank" id="DB15617">
    <property type="generic name" value="Ferric derisomaltose"/>
</dbReference>
<dbReference type="DrugBank" id="DB14490">
    <property type="generic name" value="Ferrous ascorbate"/>
</dbReference>
<dbReference type="DrugBank" id="DB14491">
    <property type="generic name" value="Ferrous fumarate"/>
</dbReference>
<dbReference type="DrugBank" id="DB14488">
    <property type="generic name" value="Ferrous gluconate"/>
</dbReference>
<dbReference type="DrugBank" id="DB14501">
    <property type="generic name" value="Ferrous glycine sulfate"/>
</dbReference>
<dbReference type="DrugBank" id="DB14489">
    <property type="generic name" value="Ferrous succinate"/>
</dbReference>
<dbReference type="DrugBank" id="DB13257">
    <property type="generic name" value="Ferrous sulfate anhydrous"/>
</dbReference>
<dbReference type="DrugBank" id="DB01592">
    <property type="generic name" value="Iron"/>
</dbReference>
<dbReference type="DrugBank" id="DB14520">
    <property type="generic name" value="Tetraferric tricitrate decahydrate"/>
</dbReference>
<dbReference type="DrugCentral" id="P02786"/>
<dbReference type="MEROPS" id="M28.972"/>
<dbReference type="TCDB" id="2.B.93.1.1">
    <property type="family name" value="the trasferrin-mediated heptapeptide-decorated nanodrug (thn) family"/>
</dbReference>
<dbReference type="TCDB" id="9.B.229.1.1">
    <property type="family name" value="the transferrin receptor, cd71, (tfr) family"/>
</dbReference>
<dbReference type="GlyConnect" id="607">
    <property type="glycosylation" value="36 N-Linked glycans (5 sites), 5 O-Linked glycans (1 site)"/>
</dbReference>
<dbReference type="GlyCosmos" id="P02786">
    <property type="glycosylation" value="7 sites, 57 glycans"/>
</dbReference>
<dbReference type="GlyGen" id="P02786">
    <property type="glycosylation" value="18 sites, 92 N-linked glycans (7 sites), 11 O-linked glycans (6 sites)"/>
</dbReference>
<dbReference type="iPTMnet" id="P02786"/>
<dbReference type="MetOSite" id="P02786"/>
<dbReference type="PhosphoSitePlus" id="P02786"/>
<dbReference type="SwissPalm" id="P02786"/>
<dbReference type="BioMuta" id="TFRC"/>
<dbReference type="DMDM" id="108935939"/>
<dbReference type="CPTAC" id="non-CPTAC-2704"/>
<dbReference type="jPOST" id="P02786"/>
<dbReference type="MassIVE" id="P02786"/>
<dbReference type="PaxDb" id="9606-ENSP00000353224"/>
<dbReference type="PeptideAtlas" id="P02786"/>
<dbReference type="ProteomicsDB" id="51595"/>
<dbReference type="Pumba" id="P02786"/>
<dbReference type="ABCD" id="P02786">
    <property type="antibodies" value="239 sequenced antibodies"/>
</dbReference>
<dbReference type="Antibodypedia" id="4559">
    <property type="antibodies" value="3139 antibodies from 49 providers"/>
</dbReference>
<dbReference type="DNASU" id="7037"/>
<dbReference type="Ensembl" id="ENST00000360110.9">
    <property type="protein sequence ID" value="ENSP00000353224.4"/>
    <property type="gene ID" value="ENSG00000072274.14"/>
</dbReference>
<dbReference type="Ensembl" id="ENST00000392396.7">
    <property type="protein sequence ID" value="ENSP00000376197.3"/>
    <property type="gene ID" value="ENSG00000072274.14"/>
</dbReference>
<dbReference type="Ensembl" id="ENST00000698280.1">
    <property type="protein sequence ID" value="ENSP00000513646.1"/>
    <property type="gene ID" value="ENSG00000072274.14"/>
</dbReference>
<dbReference type="Ensembl" id="ENST00000698291.1">
    <property type="protein sequence ID" value="ENSP00000513654.1"/>
    <property type="gene ID" value="ENSG00000072274.14"/>
</dbReference>
<dbReference type="GeneID" id="7037"/>
<dbReference type="KEGG" id="hsa:7037"/>
<dbReference type="MANE-Select" id="ENST00000360110.9">
    <property type="protein sequence ID" value="ENSP00000353224.4"/>
    <property type="RefSeq nucleotide sequence ID" value="NM_001128148.3"/>
    <property type="RefSeq protein sequence ID" value="NP_001121620.1"/>
</dbReference>
<dbReference type="UCSC" id="uc003fvz.5">
    <property type="organism name" value="human"/>
</dbReference>
<dbReference type="AGR" id="HGNC:11763"/>
<dbReference type="CTD" id="7037"/>
<dbReference type="DisGeNET" id="7037"/>
<dbReference type="GeneCards" id="TFRC"/>
<dbReference type="HGNC" id="HGNC:11763">
    <property type="gene designation" value="TFRC"/>
</dbReference>
<dbReference type="HPA" id="ENSG00000072274">
    <property type="expression patterns" value="Low tissue specificity"/>
</dbReference>
<dbReference type="MalaCards" id="TFRC"/>
<dbReference type="MIM" id="190010">
    <property type="type" value="gene"/>
</dbReference>
<dbReference type="MIM" id="616740">
    <property type="type" value="phenotype"/>
</dbReference>
<dbReference type="neXtProt" id="NX_P02786"/>
<dbReference type="OpenTargets" id="ENSG00000072274"/>
<dbReference type="Orphanet" id="476113">
    <property type="disease" value="Combined immunodeficiency due to TFRC deficiency"/>
</dbReference>
<dbReference type="PharmGKB" id="PA36478"/>
<dbReference type="VEuPathDB" id="HostDB:ENSG00000072274"/>
<dbReference type="eggNOG" id="KOG2195">
    <property type="taxonomic scope" value="Eukaryota"/>
</dbReference>
<dbReference type="GeneTree" id="ENSGT01030000234598"/>
<dbReference type="InParanoid" id="P02786"/>
<dbReference type="OMA" id="YQDSNWI"/>
<dbReference type="OrthoDB" id="5841748at2759"/>
<dbReference type="PAN-GO" id="P02786">
    <property type="GO annotations" value="3 GO annotations based on evolutionary models"/>
</dbReference>
<dbReference type="PhylomeDB" id="P02786"/>
<dbReference type="TreeFam" id="TF312981"/>
<dbReference type="PathwayCommons" id="P02786"/>
<dbReference type="Reactome" id="R-HSA-432722">
    <property type="pathway name" value="Golgi Associated Vesicle Biogenesis"/>
</dbReference>
<dbReference type="Reactome" id="R-HSA-8856825">
    <property type="pathway name" value="Cargo recognition for clathrin-mediated endocytosis"/>
</dbReference>
<dbReference type="Reactome" id="R-HSA-8856828">
    <property type="pathway name" value="Clathrin-mediated endocytosis"/>
</dbReference>
<dbReference type="Reactome" id="R-HSA-8980692">
    <property type="pathway name" value="RHOA GTPase cycle"/>
</dbReference>
<dbReference type="Reactome" id="R-HSA-9013026">
    <property type="pathway name" value="RHOB GTPase cycle"/>
</dbReference>
<dbReference type="Reactome" id="R-HSA-9013106">
    <property type="pathway name" value="RHOC GTPase cycle"/>
</dbReference>
<dbReference type="Reactome" id="R-HSA-9013148">
    <property type="pathway name" value="CDC42 GTPase cycle"/>
</dbReference>
<dbReference type="Reactome" id="R-HSA-9013149">
    <property type="pathway name" value="RAC1 GTPase cycle"/>
</dbReference>
<dbReference type="Reactome" id="R-HSA-9013404">
    <property type="pathway name" value="RAC2 GTPase cycle"/>
</dbReference>
<dbReference type="Reactome" id="R-HSA-9013406">
    <property type="pathway name" value="RHOQ GTPase cycle"/>
</dbReference>
<dbReference type="Reactome" id="R-HSA-9013407">
    <property type="pathway name" value="RHOH GTPase cycle"/>
</dbReference>
<dbReference type="Reactome" id="R-HSA-9013408">
    <property type="pathway name" value="RHOG GTPase cycle"/>
</dbReference>
<dbReference type="Reactome" id="R-HSA-9013409">
    <property type="pathway name" value="RHOJ GTPase cycle"/>
</dbReference>
<dbReference type="Reactome" id="R-HSA-9013423">
    <property type="pathway name" value="RAC3 GTPase cycle"/>
</dbReference>
<dbReference type="Reactome" id="R-HSA-917977">
    <property type="pathway name" value="Transferrin endocytosis and recycling"/>
</dbReference>
<dbReference type="Reactome" id="R-HSA-9696270">
    <property type="pathway name" value="RND2 GTPase cycle"/>
</dbReference>
<dbReference type="Reactome" id="R-HSA-9696273">
    <property type="pathway name" value="RND1 GTPase cycle"/>
</dbReference>
<dbReference type="Reactome" id="R-HSA-9725554">
    <property type="pathway name" value="Differentiation of Keratinocytes in Interfollicular Epidermis in Mammalian Skin"/>
</dbReference>
<dbReference type="SignaLink" id="P02786"/>
<dbReference type="SIGNOR" id="P02786"/>
<dbReference type="BioGRID-ORCS" id="7037">
    <property type="hits" value="570 hits in 1175 CRISPR screens"/>
</dbReference>
<dbReference type="ChiTaRS" id="TFRC">
    <property type="organism name" value="human"/>
</dbReference>
<dbReference type="EvolutionaryTrace" id="P02786"/>
<dbReference type="GeneWiki" id="TFRC"/>
<dbReference type="GenomeRNAi" id="7037"/>
<dbReference type="Pharos" id="P02786">
    <property type="development level" value="Tclin"/>
</dbReference>
<dbReference type="PRO" id="PR:P02786"/>
<dbReference type="Proteomes" id="UP000005640">
    <property type="component" value="Chromosome 3"/>
</dbReference>
<dbReference type="RNAct" id="P02786">
    <property type="molecule type" value="protein"/>
</dbReference>
<dbReference type="Bgee" id="ENSG00000072274">
    <property type="expression patterns" value="Expressed in endothelial cell and 211 other cell types or tissues"/>
</dbReference>
<dbReference type="ExpressionAtlas" id="P02786">
    <property type="expression patterns" value="baseline and differential"/>
</dbReference>
<dbReference type="GO" id="GO:0016323">
    <property type="term" value="C:basolateral plasma membrane"/>
    <property type="evidence" value="ECO:0000314"/>
    <property type="project" value="BHF-UCL"/>
</dbReference>
<dbReference type="GO" id="GO:0072562">
    <property type="term" value="C:blood microparticle"/>
    <property type="evidence" value="ECO:0007005"/>
    <property type="project" value="UniProtKB"/>
</dbReference>
<dbReference type="GO" id="GO:0009986">
    <property type="term" value="C:cell surface"/>
    <property type="evidence" value="ECO:0000314"/>
    <property type="project" value="UniProtKB"/>
</dbReference>
<dbReference type="GO" id="GO:0030669">
    <property type="term" value="C:clathrin-coated endocytic vesicle membrane"/>
    <property type="evidence" value="ECO:0000304"/>
    <property type="project" value="Reactome"/>
</dbReference>
<dbReference type="GO" id="GO:0005905">
    <property type="term" value="C:clathrin-coated pit"/>
    <property type="evidence" value="ECO:0000314"/>
    <property type="project" value="UniProtKB"/>
</dbReference>
<dbReference type="GO" id="GO:0031410">
    <property type="term" value="C:cytoplasmic vesicle"/>
    <property type="evidence" value="ECO:0000314"/>
    <property type="project" value="MGI"/>
</dbReference>
<dbReference type="GO" id="GO:0005769">
    <property type="term" value="C:early endosome"/>
    <property type="evidence" value="ECO:0007669"/>
    <property type="project" value="Ensembl"/>
</dbReference>
<dbReference type="GO" id="GO:0005768">
    <property type="term" value="C:endosome"/>
    <property type="evidence" value="ECO:0000314"/>
    <property type="project" value="MGI"/>
</dbReference>
<dbReference type="GO" id="GO:0010008">
    <property type="term" value="C:endosome membrane"/>
    <property type="evidence" value="ECO:0000314"/>
    <property type="project" value="CAFA"/>
</dbReference>
<dbReference type="GO" id="GO:0009897">
    <property type="term" value="C:external side of plasma membrane"/>
    <property type="evidence" value="ECO:0000316"/>
    <property type="project" value="BHF-UCL"/>
</dbReference>
<dbReference type="GO" id="GO:0070062">
    <property type="term" value="C:extracellular exosome"/>
    <property type="evidence" value="ECO:0007005"/>
    <property type="project" value="UniProtKB"/>
</dbReference>
<dbReference type="GO" id="GO:0005576">
    <property type="term" value="C:extracellular region"/>
    <property type="evidence" value="ECO:0000314"/>
    <property type="project" value="UniProtKB"/>
</dbReference>
<dbReference type="GO" id="GO:0005615">
    <property type="term" value="C:extracellular space"/>
    <property type="evidence" value="ECO:0007005"/>
    <property type="project" value="UniProtKB"/>
</dbReference>
<dbReference type="GO" id="GO:1903561">
    <property type="term" value="C:extracellular vesicle"/>
    <property type="evidence" value="ECO:0007005"/>
    <property type="project" value="UniProtKB"/>
</dbReference>
<dbReference type="GO" id="GO:0098978">
    <property type="term" value="C:glutamatergic synapse"/>
    <property type="evidence" value="ECO:0007669"/>
    <property type="project" value="Ensembl"/>
</dbReference>
<dbReference type="GO" id="GO:1990712">
    <property type="term" value="C:HFE-transferrin receptor complex"/>
    <property type="evidence" value="ECO:0000314"/>
    <property type="project" value="BHF-UCL"/>
</dbReference>
<dbReference type="GO" id="GO:0043231">
    <property type="term" value="C:intracellular membrane-bounded organelle"/>
    <property type="evidence" value="ECO:0000314"/>
    <property type="project" value="UniProtKB"/>
</dbReference>
<dbReference type="GO" id="GO:0042470">
    <property type="term" value="C:melanosome"/>
    <property type="evidence" value="ECO:0007669"/>
    <property type="project" value="UniProtKB-SubCell"/>
</dbReference>
<dbReference type="GO" id="GO:0016020">
    <property type="term" value="C:membrane"/>
    <property type="evidence" value="ECO:0000303"/>
    <property type="project" value="UniProtKB"/>
</dbReference>
<dbReference type="GO" id="GO:0048471">
    <property type="term" value="C:perinuclear region of cytoplasm"/>
    <property type="evidence" value="ECO:0000314"/>
    <property type="project" value="CAFA"/>
</dbReference>
<dbReference type="GO" id="GO:0005886">
    <property type="term" value="C:plasma membrane"/>
    <property type="evidence" value="ECO:0000314"/>
    <property type="project" value="UniProtKB"/>
</dbReference>
<dbReference type="GO" id="GO:0098944">
    <property type="term" value="C:postsynaptic recycling endosome membrane"/>
    <property type="evidence" value="ECO:0007669"/>
    <property type="project" value="Ensembl"/>
</dbReference>
<dbReference type="GO" id="GO:0055037">
    <property type="term" value="C:recycling endosome"/>
    <property type="evidence" value="ECO:0000314"/>
    <property type="project" value="UniProtKB"/>
</dbReference>
<dbReference type="GO" id="GO:0055038">
    <property type="term" value="C:recycling endosome membrane"/>
    <property type="evidence" value="ECO:0007669"/>
    <property type="project" value="Ensembl"/>
</dbReference>
<dbReference type="GO" id="GO:0003725">
    <property type="term" value="F:double-stranded RNA binding"/>
    <property type="evidence" value="ECO:0000314"/>
    <property type="project" value="MGI"/>
</dbReference>
<dbReference type="GO" id="GO:0030544">
    <property type="term" value="F:Hsp70 protein binding"/>
    <property type="evidence" value="ECO:0007669"/>
    <property type="project" value="Ensembl"/>
</dbReference>
<dbReference type="GO" id="GO:0042802">
    <property type="term" value="F:identical protein binding"/>
    <property type="evidence" value="ECO:0000353"/>
    <property type="project" value="IntAct"/>
</dbReference>
<dbReference type="GO" id="GO:0042803">
    <property type="term" value="F:protein homodimerization activity"/>
    <property type="evidence" value="ECO:0000353"/>
    <property type="project" value="BHF-UCL"/>
</dbReference>
<dbReference type="GO" id="GO:0019901">
    <property type="term" value="F:protein kinase binding"/>
    <property type="evidence" value="ECO:0000353"/>
    <property type="project" value="ARUK-UCL"/>
</dbReference>
<dbReference type="GO" id="GO:0044877">
    <property type="term" value="F:protein-containing complex binding"/>
    <property type="evidence" value="ECO:0000353"/>
    <property type="project" value="ARUK-UCL"/>
</dbReference>
<dbReference type="GO" id="GO:0003723">
    <property type="term" value="F:RNA binding"/>
    <property type="evidence" value="ECO:0007005"/>
    <property type="project" value="UniProtKB"/>
</dbReference>
<dbReference type="GO" id="GO:0004998">
    <property type="term" value="F:transferrin receptor activity"/>
    <property type="evidence" value="ECO:0000314"/>
    <property type="project" value="UniProtKB"/>
</dbReference>
<dbReference type="GO" id="GO:0001618">
    <property type="term" value="F:virus receptor activity"/>
    <property type="evidence" value="ECO:0007669"/>
    <property type="project" value="UniProtKB-KW"/>
</dbReference>
<dbReference type="GO" id="GO:0006953">
    <property type="term" value="P:acute-phase response"/>
    <property type="evidence" value="ECO:0007669"/>
    <property type="project" value="Ensembl"/>
</dbReference>
<dbReference type="GO" id="GO:1990830">
    <property type="term" value="P:cellular response to leukemia inhibitory factor"/>
    <property type="evidence" value="ECO:0007669"/>
    <property type="project" value="Ensembl"/>
</dbReference>
<dbReference type="GO" id="GO:0071466">
    <property type="term" value="P:cellular response to xenobiotic stimulus"/>
    <property type="evidence" value="ECO:0000314"/>
    <property type="project" value="MGI"/>
</dbReference>
<dbReference type="GO" id="GO:0006879">
    <property type="term" value="P:intracellular iron ion homeostasis"/>
    <property type="evidence" value="ECO:0000318"/>
    <property type="project" value="GO_Central"/>
</dbReference>
<dbReference type="GO" id="GO:0035556">
    <property type="term" value="P:intracellular signal transduction"/>
    <property type="evidence" value="ECO:0000315"/>
    <property type="project" value="UniProtKB"/>
</dbReference>
<dbReference type="GO" id="GO:0006826">
    <property type="term" value="P:iron ion transport"/>
    <property type="evidence" value="ECO:0000314"/>
    <property type="project" value="UniProtKB"/>
</dbReference>
<dbReference type="GO" id="GO:0060586">
    <property type="term" value="P:multicellular organismal-level iron ion homeostasis"/>
    <property type="evidence" value="ECO:0000314"/>
    <property type="project" value="UniProt"/>
</dbReference>
<dbReference type="GO" id="GO:0043066">
    <property type="term" value="P:negative regulation of apoptotic process"/>
    <property type="evidence" value="ECO:0000315"/>
    <property type="project" value="ARUK-UCL"/>
</dbReference>
<dbReference type="GO" id="GO:0010637">
    <property type="term" value="P:negative regulation of mitochondrial fusion"/>
    <property type="evidence" value="ECO:0000315"/>
    <property type="project" value="UniProtKB"/>
</dbReference>
<dbReference type="GO" id="GO:0030316">
    <property type="term" value="P:osteoclast differentiation"/>
    <property type="evidence" value="ECO:0007669"/>
    <property type="project" value="Ensembl"/>
</dbReference>
<dbReference type="GO" id="GO:0030890">
    <property type="term" value="P:positive regulation of B cell proliferation"/>
    <property type="evidence" value="ECO:0000314"/>
    <property type="project" value="UniProtKB"/>
</dbReference>
<dbReference type="GO" id="GO:0043123">
    <property type="term" value="P:positive regulation of canonical NF-kappaB signal transduction"/>
    <property type="evidence" value="ECO:0000315"/>
    <property type="project" value="ARUK-UCL"/>
</dbReference>
<dbReference type="GO" id="GO:0010628">
    <property type="term" value="P:positive regulation of gene expression"/>
    <property type="evidence" value="ECO:0000315"/>
    <property type="project" value="ARUK-UCL"/>
</dbReference>
<dbReference type="GO" id="GO:0045830">
    <property type="term" value="P:positive regulation of isotype switching"/>
    <property type="evidence" value="ECO:0000314"/>
    <property type="project" value="UniProtKB"/>
</dbReference>
<dbReference type="GO" id="GO:1900182">
    <property type="term" value="P:positive regulation of protein localization to nucleus"/>
    <property type="evidence" value="ECO:0000315"/>
    <property type="project" value="ARUK-UCL"/>
</dbReference>
<dbReference type="GO" id="GO:0031334">
    <property type="term" value="P:positive regulation of protein-containing complex assembly"/>
    <property type="evidence" value="ECO:0000315"/>
    <property type="project" value="ARUK-UCL"/>
</dbReference>
<dbReference type="GO" id="GO:0042102">
    <property type="term" value="P:positive regulation of T cell proliferation"/>
    <property type="evidence" value="ECO:0000314"/>
    <property type="project" value="UniProtKB"/>
</dbReference>
<dbReference type="GO" id="GO:0031623">
    <property type="term" value="P:receptor internalization"/>
    <property type="evidence" value="ECO:0000314"/>
    <property type="project" value="UniProtKB"/>
</dbReference>
<dbReference type="GO" id="GO:0099072">
    <property type="term" value="P:regulation of postsynaptic membrane neurotransmitter receptor levels"/>
    <property type="evidence" value="ECO:0007669"/>
    <property type="project" value="Ensembl"/>
</dbReference>
<dbReference type="GO" id="GO:0046688">
    <property type="term" value="P:response to copper ion"/>
    <property type="evidence" value="ECO:0007669"/>
    <property type="project" value="Ensembl"/>
</dbReference>
<dbReference type="GO" id="GO:0001666">
    <property type="term" value="P:response to hypoxia"/>
    <property type="evidence" value="ECO:0007669"/>
    <property type="project" value="Ensembl"/>
</dbReference>
<dbReference type="GO" id="GO:0010039">
    <property type="term" value="P:response to iron ion"/>
    <property type="evidence" value="ECO:0007669"/>
    <property type="project" value="Ensembl"/>
</dbReference>
<dbReference type="GO" id="GO:0010042">
    <property type="term" value="P:response to manganese ion"/>
    <property type="evidence" value="ECO:0007669"/>
    <property type="project" value="Ensembl"/>
</dbReference>
<dbReference type="GO" id="GO:0007584">
    <property type="term" value="P:response to nutrient"/>
    <property type="evidence" value="ECO:0007669"/>
    <property type="project" value="Ensembl"/>
</dbReference>
<dbReference type="GO" id="GO:0032526">
    <property type="term" value="P:response to retinoic acid"/>
    <property type="evidence" value="ECO:0007669"/>
    <property type="project" value="Ensembl"/>
</dbReference>
<dbReference type="GO" id="GO:0033572">
    <property type="term" value="P:transferrin transport"/>
    <property type="evidence" value="ECO:0000314"/>
    <property type="project" value="UniProtKB"/>
</dbReference>
<dbReference type="GO" id="GO:0150104">
    <property type="term" value="P:transport across blood-brain barrier"/>
    <property type="evidence" value="ECO:0000303"/>
    <property type="project" value="ARUK-UCL"/>
</dbReference>
<dbReference type="CDD" id="cd09848">
    <property type="entry name" value="M28_TfR"/>
    <property type="match status" value="1"/>
</dbReference>
<dbReference type="CDD" id="cd02128">
    <property type="entry name" value="PA_TfR"/>
    <property type="match status" value="1"/>
</dbReference>
<dbReference type="FunFam" id="1.20.930.40:FF:000002">
    <property type="entry name" value="Transferrin receptor protein 1"/>
    <property type="match status" value="1"/>
</dbReference>
<dbReference type="FunFam" id="3.40.630.10:FF:000045">
    <property type="entry name" value="Transferrin receptor protein 1"/>
    <property type="match status" value="1"/>
</dbReference>
<dbReference type="FunFam" id="3.50.30.30:FF:000010">
    <property type="entry name" value="Transferrin receptor protein 1"/>
    <property type="match status" value="1"/>
</dbReference>
<dbReference type="Gene3D" id="3.50.30.30">
    <property type="match status" value="1"/>
</dbReference>
<dbReference type="Gene3D" id="1.20.930.40">
    <property type="entry name" value="Transferrin receptor-like, dimerisation domain"/>
    <property type="match status" value="1"/>
</dbReference>
<dbReference type="Gene3D" id="3.40.630.10">
    <property type="entry name" value="Zn peptidases"/>
    <property type="match status" value="1"/>
</dbReference>
<dbReference type="InterPro" id="IPR046450">
    <property type="entry name" value="PA_dom_sf"/>
</dbReference>
<dbReference type="InterPro" id="IPR003137">
    <property type="entry name" value="PA_domain"/>
</dbReference>
<dbReference type="InterPro" id="IPR007484">
    <property type="entry name" value="Peptidase_M28"/>
</dbReference>
<dbReference type="InterPro" id="IPR039373">
    <property type="entry name" value="Peptidase_M28B"/>
</dbReference>
<dbReference type="InterPro" id="IPR007365">
    <property type="entry name" value="TFR-like_dimer_dom"/>
</dbReference>
<dbReference type="InterPro" id="IPR036757">
    <property type="entry name" value="TFR-like_dimer_dom_sf"/>
</dbReference>
<dbReference type="InterPro" id="IPR037324">
    <property type="entry name" value="TfR1/2_PA"/>
</dbReference>
<dbReference type="PANTHER" id="PTHR10404">
    <property type="entry name" value="N-ACETYLATED-ALPHA-LINKED ACIDIC DIPEPTIDASE"/>
    <property type="match status" value="1"/>
</dbReference>
<dbReference type="PANTHER" id="PTHR10404:SF26">
    <property type="entry name" value="TRANSFERRIN RECEPTOR PROTEIN 1"/>
    <property type="match status" value="1"/>
</dbReference>
<dbReference type="Pfam" id="PF02225">
    <property type="entry name" value="PA"/>
    <property type="match status" value="1"/>
</dbReference>
<dbReference type="Pfam" id="PF04389">
    <property type="entry name" value="Peptidase_M28"/>
    <property type="match status" value="1"/>
</dbReference>
<dbReference type="Pfam" id="PF04253">
    <property type="entry name" value="TFR_dimer"/>
    <property type="match status" value="1"/>
</dbReference>
<dbReference type="SUPFAM" id="SSF52025">
    <property type="entry name" value="PA domain"/>
    <property type="match status" value="1"/>
</dbReference>
<dbReference type="SUPFAM" id="SSF47672">
    <property type="entry name" value="Transferrin receptor-like dimerisation domain"/>
    <property type="match status" value="1"/>
</dbReference>
<dbReference type="SUPFAM" id="SSF53187">
    <property type="entry name" value="Zn-dependent exopeptidases"/>
    <property type="match status" value="1"/>
</dbReference>
<comment type="function">
    <text evidence="1 17 18 19">Cellular uptake of iron occurs via receptor-mediated endocytosis of ligand-occupied transferrin receptor into specialized endosomes (PubMed:26214738). Endosomal acidification leads to iron release. The apotransferrin-receptor complex is then recycled to the cell surface with a return to neutral pH and the concomitant loss of affinity of apotransferrin for its receptor. Transferrin receptor is necessary for development of erythrocytes and the nervous system (By similarity). A second ligand, the hereditary hemochromatosis protein HFE, competes for binding with transferrin for an overlapping C-terminal binding site. Positively regulates T and B cell proliferation through iron uptake (PubMed:26642240). Acts as a lipid sensor that regulates mitochondrial fusion by regulating activation of the JNK pathway (PubMed:26214738). When dietary levels of stearate (C18:0) are low, promotes activation of the JNK pathway, resulting in HUWE1-mediated ubiquitination and subsequent degradation of the mitofusin MFN2 and inhibition of mitochondrial fusion (PubMed:26214738). When dietary levels of stearate (C18:0) are high, TFRC stearoylation inhibits activation of the JNK pathway and thus degradation of the mitofusin MFN2 (PubMed:26214738). Mediates uptake of NICOL1 into fibroblasts where it may regulate extracellular matrix production (By similarity).</text>
</comment>
<comment type="function">
    <text evidence="11 12">(Microbial infection) Acts as a receptor for new-world arenaviruses: Guanarito, Junin and Machupo virus.</text>
</comment>
<comment type="function">
    <text evidence="21 22">(Microbial infection) Acts as a host entry factor for rabies virus that hijacks the endocytosis of TFRC to enter cells.</text>
</comment>
<comment type="function">
    <text evidence="21">(Microbial infection) Acts as a host entry factor for SARS-CoV, MERS-CoV and SARS-CoV-2 viruses that hijack the endocytosis of TFRC to enter cells.</text>
</comment>
<comment type="subunit">
    <text evidence="8 18 22">Homodimer; disulfide-linked. Binds one transferrin or HFE molecule per subunit. Binds the HLA class II histocompatibility antigen, DR1. Interacts with SH3BP3. Interacts with STEAP3; facilitates TFRC endocytosis in erythroid precursor cells (PubMed:26642240). Interacts with GRM2 (PubMed:36779763).</text>
</comment>
<comment type="subunit">
    <text evidence="11 12">(Microbial infection) Interacts with Guanarito, Junin and Machupo arenavirus glycoprotein complex (PubMed:17287727, PubMed:18268337).</text>
</comment>
<comment type="subunit">
    <text evidence="21 22">(Microbial infection) Interacts with rabies virus protein G.</text>
</comment>
<comment type="subunit">
    <text evidence="21 22">(Microbial infection) Interacts with SARS-CoV-2 spike protein S.</text>
</comment>
<comment type="interaction">
    <interactant intactId="EBI-355727">
        <id>P02786</id>
    </interactant>
    <interactant intactId="EBI-714423">
        <id>P02768</id>
        <label>ALB</label>
    </interactant>
    <organismsDiffer>false</organismsDiffer>
    <experiments>2</experiments>
</comment>
<comment type="interaction">
    <interactant intactId="EBI-355727">
        <id>P02786</id>
    </interactant>
    <interactant intactId="EBI-13059134">
        <id>Q13520</id>
        <label>AQP6</label>
    </interactant>
    <organismsDiffer>false</organismsDiffer>
    <experiments>3</experiments>
</comment>
<comment type="interaction">
    <interactant intactId="EBI-355727">
        <id>P02786</id>
    </interactant>
    <interactant intactId="EBI-11343438">
        <id>Q3SXY8</id>
        <label>ARL13B</label>
    </interactant>
    <organismsDiffer>false</organismsDiffer>
    <experiments>3</experiments>
</comment>
<comment type="interaction">
    <interactant intactId="EBI-355727">
        <id>P02786</id>
    </interactant>
    <interactant intactId="EBI-12808270">
        <id>P07307-3</id>
        <label>ASGR2</label>
    </interactant>
    <organismsDiffer>false</organismsDiffer>
    <experiments>3</experiments>
</comment>
<comment type="interaction">
    <interactant intactId="EBI-355727">
        <id>P02786</id>
    </interactant>
    <interactant intactId="EBI-17586094">
        <id>Q96HA4-2</id>
        <label>C1orf159</label>
    </interactant>
    <organismsDiffer>false</organismsDiffer>
    <experiments>3</experiments>
</comment>
<comment type="interaction">
    <interactant intactId="EBI-355727">
        <id>P02786</id>
    </interactant>
    <interactant intactId="EBI-6942903">
        <id>Q96BA8</id>
        <label>CREB3L1</label>
    </interactant>
    <organismsDiffer>false</organismsDiffer>
    <experiments>3</experiments>
</comment>
<comment type="interaction">
    <interactant intactId="EBI-355727">
        <id>P02786</id>
    </interactant>
    <interactant intactId="EBI-18304435">
        <id>Q5JX71</id>
        <label>FAM209A</label>
    </interactant>
    <organismsDiffer>false</organismsDiffer>
    <experiments>3</experiments>
</comment>
<comment type="interaction">
    <interactant intactId="EBI-355727">
        <id>P02786</id>
    </interactant>
    <interactant intactId="EBI-18938272">
        <id>Q96KR6</id>
        <label>FAM210B</label>
    </interactant>
    <organismsDiffer>false</organismsDiffer>
    <experiments>3</experiments>
</comment>
<comment type="interaction">
    <interactant intactId="EBI-355727">
        <id>P02786</id>
    </interactant>
    <interactant intactId="EBI-713259">
        <id>P02794</id>
        <label>FTH1</label>
    </interactant>
    <organismsDiffer>false</organismsDiffer>
    <experiments>2</experiments>
</comment>
<comment type="interaction">
    <interactant intactId="EBI-355727">
        <id>P02786</id>
    </interactant>
    <interactant intactId="EBI-18908258">
        <id>O00258</id>
        <label>GET1</label>
    </interactant>
    <organismsDiffer>false</organismsDiffer>
    <experiments>3</experiments>
</comment>
<comment type="interaction">
    <interactant intactId="EBI-355727">
        <id>P02786</id>
    </interactant>
    <interactant intactId="EBI-13345167">
        <id>Q8TDT2</id>
        <label>GPR152</label>
    </interactant>
    <organismsDiffer>false</organismsDiffer>
    <experiments>3</experiments>
</comment>
<comment type="interaction">
    <interactant intactId="EBI-355727">
        <id>P02786</id>
    </interactant>
    <interactant intactId="EBI-1028850">
        <id>Q30201</id>
        <label>HFE</label>
    </interactant>
    <organismsDiffer>false</organismsDiffer>
    <experiments>3</experiments>
</comment>
<comment type="interaction">
    <interactant intactId="EBI-355727">
        <id>P02786</id>
    </interactant>
    <interactant intactId="EBI-15489346">
        <id>Q30201-1</id>
        <label>HFE</label>
    </interactant>
    <organismsDiffer>false</organismsDiffer>
    <experiments>3</experiments>
</comment>
<comment type="interaction">
    <interactant intactId="EBI-355727">
        <id>P02786</id>
    </interactant>
    <interactant intactId="EBI-11427100">
        <id>P31937</id>
        <label>HIBADH</label>
    </interactant>
    <organismsDiffer>false</organismsDiffer>
    <experiments>3</experiments>
</comment>
<comment type="interaction">
    <interactant intactId="EBI-355727">
        <id>P02786</id>
    </interactant>
    <interactant intactId="EBI-2820517">
        <id>Q8TAF8</id>
        <label>LHFPL5</label>
    </interactant>
    <organismsDiffer>false</organismsDiffer>
    <experiments>3</experiments>
</comment>
<comment type="interaction">
    <interactant intactId="EBI-355727">
        <id>P02786</id>
    </interactant>
    <interactant intactId="EBI-11956541">
        <id>Q9GZY8-5</id>
        <label>MFF</label>
    </interactant>
    <organismsDiffer>false</organismsDiffer>
    <experiments>3</experiments>
</comment>
<comment type="interaction">
    <interactant intactId="EBI-355727">
        <id>P02786</id>
    </interactant>
    <interactant intactId="EBI-724754">
        <id>O14880</id>
        <label>MGST3</label>
    </interactant>
    <organismsDiffer>false</organismsDiffer>
    <experiments>3</experiments>
</comment>
<comment type="interaction">
    <interactant intactId="EBI-355727">
        <id>P02786</id>
    </interactant>
    <interactant intactId="EBI-2559100">
        <id>O75459</id>
        <label>PAGE1</label>
    </interactant>
    <organismsDiffer>false</organismsDiffer>
    <experiments>3</experiments>
</comment>
<comment type="interaction">
    <interactant intactId="EBI-355727">
        <id>P02786</id>
    </interactant>
    <interactant intactId="EBI-2845202">
        <id>Q86WH2</id>
        <label>RASSF3</label>
    </interactant>
    <organismsDiffer>false</organismsDiffer>
    <experiments>3</experiments>
</comment>
<comment type="interaction">
    <interactant intactId="EBI-355727">
        <id>P02786</id>
    </interactant>
    <interactant intactId="EBI-10269209">
        <id>Q8NC24</id>
        <label>RELL2</label>
    </interactant>
    <organismsDiffer>false</organismsDiffer>
    <experiments>3</experiments>
</comment>
<comment type="interaction">
    <interactant intactId="EBI-355727">
        <id>P02786</id>
    </interactant>
    <interactant intactId="EBI-1056589">
        <id>Q96TC7</id>
        <label>RMDN3</label>
    </interactant>
    <organismsDiffer>false</organismsDiffer>
    <experiments>3</experiments>
</comment>
<comment type="interaction">
    <interactant intactId="EBI-355727">
        <id>P02786</id>
    </interactant>
    <interactant intactId="EBI-347996">
        <id>O43765</id>
        <label>SGTA</label>
    </interactant>
    <organismsDiffer>false</organismsDiffer>
    <experiments>6</experiments>
</comment>
<comment type="interaction">
    <interactant intactId="EBI-355727">
        <id>P02786</id>
    </interactant>
    <interactant intactId="EBI-1049513">
        <id>Q9P0V3</id>
        <label>SH3BP4</label>
    </interactant>
    <organismsDiffer>false</organismsDiffer>
    <experiments>6</experiments>
</comment>
<comment type="interaction">
    <interactant intactId="EBI-355727">
        <id>P02786</id>
    </interactant>
    <interactant intactId="EBI-3923031">
        <id>Q14973</id>
        <label>SLC10A1</label>
    </interactant>
    <organismsDiffer>false</organismsDiffer>
    <experiments>3</experiments>
</comment>
<comment type="interaction">
    <interactant intactId="EBI-355727">
        <id>P02786</id>
    </interactant>
    <interactant intactId="EBI-17595455">
        <id>P54219-3</id>
        <label>SLC18A1</label>
    </interactant>
    <organismsDiffer>false</organismsDiffer>
    <experiments>3</experiments>
</comment>
<comment type="interaction">
    <interactant intactId="EBI-355727">
        <id>P02786</id>
    </interactant>
    <interactant intactId="EBI-714319">
        <id>P02787</id>
        <label>TF</label>
    </interactant>
    <organismsDiffer>false</organismsDiffer>
    <experiments>7</experiments>
</comment>
<comment type="interaction">
    <interactant intactId="EBI-355727">
        <id>P02786</id>
    </interactant>
    <interactant intactId="EBI-40201768">
        <id>PRO_0000035715</id>
        <label>TF</label>
        <dbReference type="UniProtKB" id="P02787"/>
    </interactant>
    <organismsDiffer>false</organismsDiffer>
    <experiments>4</experiments>
</comment>
<comment type="interaction">
    <interactant intactId="EBI-355727">
        <id>P02786</id>
    </interactant>
    <interactant intactId="EBI-355727">
        <id>P02786</id>
        <label>TFRC</label>
    </interactant>
    <organismsDiffer>false</organismsDiffer>
    <experiments>4</experiments>
</comment>
<comment type="interaction">
    <interactant intactId="EBI-355727">
        <id>P02786</id>
    </interactant>
    <interactant intactId="EBI-20622076">
        <id>A5K736</id>
        <label>PVX_094255</label>
    </interactant>
    <organismsDiffer>true</organismsDiffer>
    <experiments>12</experiments>
</comment>
<comment type="subcellular location">
    <subcellularLocation>
        <location evidence="10">Cell membrane</location>
        <topology evidence="10">Single-pass type II membrane protein</topology>
    </subcellularLocation>
    <subcellularLocation>
        <location evidence="10">Melanosome</location>
    </subcellularLocation>
    <text evidence="10">Identified by mass spectrometry in melanosome fractions from stage I to stage IV.</text>
</comment>
<comment type="subcellular location">
    <molecule>Transferrin receptor protein 1, serum form</molecule>
    <subcellularLocation>
        <location evidence="10">Secreted</location>
    </subcellularLocation>
</comment>
<comment type="induction">
    <text>Regulated by cellular iron levels through binding of the iron regulatory proteins, IRP1 and IRP2, to iron-responsive elements in the 3'-UTR. Up-regulated upon mitogenic stimulation.</text>
</comment>
<comment type="PTM">
    <text evidence="17">Stearoylated by ZDHHC6 which inhibits TFRC-mediated activation of the JNK pathway and promotes mitochondrial fragmentation (PubMed:26214738). Stearoylation does not affect iron uptake (PubMed:26214738).</text>
</comment>
<comment type="PTM">
    <text evidence="6 7 9 13 14 20">N- and O-glycosylated, phosphorylated and palmitoylated. The serum form is only glycosylated.</text>
</comment>
<comment type="PTM">
    <text>Proteolytically cleaved on Arg-100 to produce the soluble serum form (sTfR).</text>
</comment>
<comment type="PTM">
    <text evidence="20">Palmitoylated on both Cys-62 and Cys-67. Cys-62 seems to be the major site of palmitoylation.</text>
</comment>
<comment type="disease" evidence="18">
    <disease id="DI-04634">
        <name>Immunodeficiency 46</name>
        <acronym>IMD46</acronym>
        <description>An autosomal recessive primary immunodeficiency disorder characterized by early-onset chronic diarrhea, recurrent infections, hypo- or agammaglobulinemia, normal lymphocyte counts, intermittent neutropenia, and intermittent thrombocytopenia.</description>
        <dbReference type="MIM" id="616740"/>
    </disease>
    <text>The disease is caused by variants affecting the gene represented in this entry.</text>
</comment>
<comment type="miscellaneous">
    <text>Serum transferrin receptor (sTfR) is used as a means of detecting erythropoietin (EPO) misuse by athletes and as a diagnostic test for anemia resulting from a number of conditions including rheumatoid arthritis, pregnancy, irritable bowel syndrome and in HIV patients.</text>
</comment>
<comment type="miscellaneous">
    <text>Canine and feline parvoviruses bind human and feline transferrin receptors and use these receptors to enter and infect cells.</text>
</comment>
<comment type="similarity">
    <text evidence="29">Belongs to the peptidase M28 family. M28B subfamily.</text>
</comment>
<comment type="sequence caution" evidence="29">
    <conflict type="erroneous initiation">
        <sequence resource="EMBL-CDS" id="BAD92491"/>
    </conflict>
</comment>
<comment type="online information" name="Atlas of Genetics and Cytogenetics in Oncology and Haematology">
    <link uri="https://atlasgeneticsoncology.org/gene/259/TFRC"/>
</comment>